<protein>
    <recommendedName>
        <fullName evidence="24 25">Nitric oxide synthase 1</fullName>
        <ecNumber evidence="15 16 19">1.14.13.39</ecNumber>
    </recommendedName>
    <alternativeName>
        <fullName>Constitutive NOS</fullName>
    </alternativeName>
    <alternativeName>
        <fullName>NC-NOS</fullName>
    </alternativeName>
    <alternativeName>
        <fullName>NOS type I</fullName>
    </alternativeName>
    <alternativeName>
        <fullName>Neuronal NOS</fullName>
        <shortName>N-NOS</shortName>
        <shortName>nNOS</shortName>
    </alternativeName>
    <alternativeName>
        <fullName evidence="23">Nitric oxide synthase, brain</fullName>
        <shortName evidence="23">bNOS</shortName>
    </alternativeName>
    <alternativeName>
        <fullName>Peptidyl-cysteine S-nitrosylase NOS1</fullName>
    </alternativeName>
</protein>
<dbReference type="EC" id="1.14.13.39" evidence="15 16 19"/>
<dbReference type="EMBL" id="X59949">
    <property type="protein sequence ID" value="CAA42574.1"/>
    <property type="molecule type" value="mRNA"/>
</dbReference>
<dbReference type="EMBL" id="U67309">
    <property type="protein sequence ID" value="AAC52782.1"/>
    <property type="molecule type" value="mRNA"/>
</dbReference>
<dbReference type="PIR" id="S16233">
    <property type="entry name" value="S16233"/>
</dbReference>
<dbReference type="RefSeq" id="NP_434686.1">
    <property type="nucleotide sequence ID" value="NM_052799.1"/>
</dbReference>
<dbReference type="PDB" id="1B8Q">
    <property type="method" value="NMR"/>
    <property type="chains" value="A=11-133"/>
</dbReference>
<dbReference type="PDB" id="1CMI">
    <property type="method" value="X-ray"/>
    <property type="resolution" value="2.50 A"/>
    <property type="chains" value="C/D=225-237"/>
</dbReference>
<dbReference type="PDB" id="1F20">
    <property type="method" value="X-ray"/>
    <property type="resolution" value="1.90 A"/>
    <property type="chains" value="A=963-1397"/>
</dbReference>
<dbReference type="PDB" id="1K2R">
    <property type="method" value="X-ray"/>
    <property type="resolution" value="2.15 A"/>
    <property type="chains" value="A/B=299-717"/>
</dbReference>
<dbReference type="PDB" id="1K2S">
    <property type="method" value="X-ray"/>
    <property type="resolution" value="2.55 A"/>
    <property type="chains" value="A/B=299-717"/>
</dbReference>
<dbReference type="PDB" id="1K2T">
    <property type="method" value="X-ray"/>
    <property type="resolution" value="2.20 A"/>
    <property type="chains" value="A/B=299-717"/>
</dbReference>
<dbReference type="PDB" id="1K2U">
    <property type="method" value="X-ray"/>
    <property type="resolution" value="2.20 A"/>
    <property type="chains" value="A/B=299-717"/>
</dbReference>
<dbReference type="PDB" id="1LZX">
    <property type="method" value="X-ray"/>
    <property type="resolution" value="2.00 A"/>
    <property type="chains" value="A/B=299-717"/>
</dbReference>
<dbReference type="PDB" id="1LZZ">
    <property type="method" value="X-ray"/>
    <property type="resolution" value="2.05 A"/>
    <property type="chains" value="A/B=299-717"/>
</dbReference>
<dbReference type="PDB" id="1M00">
    <property type="method" value="X-ray"/>
    <property type="resolution" value="2.05 A"/>
    <property type="chains" value="A/B=299-717"/>
</dbReference>
<dbReference type="PDB" id="1MMV">
    <property type="method" value="X-ray"/>
    <property type="resolution" value="2.00 A"/>
    <property type="chains" value="A/B=299-717"/>
</dbReference>
<dbReference type="PDB" id="1MMW">
    <property type="method" value="X-ray"/>
    <property type="resolution" value="2.00 A"/>
    <property type="chains" value="A/B=299-717"/>
</dbReference>
<dbReference type="PDB" id="1OM4">
    <property type="method" value="X-ray"/>
    <property type="resolution" value="1.75 A"/>
    <property type="chains" value="A/B=297-718"/>
</dbReference>
<dbReference type="PDB" id="1OM5">
    <property type="method" value="X-ray"/>
    <property type="resolution" value="2.30 A"/>
    <property type="chains" value="A/B=297-717"/>
</dbReference>
<dbReference type="PDB" id="1P6H">
    <property type="method" value="X-ray"/>
    <property type="resolution" value="1.98 A"/>
    <property type="chains" value="A/B=297-717"/>
</dbReference>
<dbReference type="PDB" id="1P6I">
    <property type="method" value="X-ray"/>
    <property type="resolution" value="1.90 A"/>
    <property type="chains" value="A/B=297-717"/>
</dbReference>
<dbReference type="PDB" id="1P6J">
    <property type="method" value="X-ray"/>
    <property type="resolution" value="2.00 A"/>
    <property type="chains" value="A/B=297-717"/>
</dbReference>
<dbReference type="PDB" id="1P6K">
    <property type="method" value="X-ray"/>
    <property type="resolution" value="1.78 A"/>
    <property type="chains" value="A/B=297-717"/>
</dbReference>
<dbReference type="PDB" id="1QAU">
    <property type="method" value="X-ray"/>
    <property type="resolution" value="1.25 A"/>
    <property type="chains" value="A=14-125"/>
</dbReference>
<dbReference type="PDB" id="1QAV">
    <property type="method" value="X-ray"/>
    <property type="resolution" value="1.90 A"/>
    <property type="chains" value="B=12-126"/>
</dbReference>
<dbReference type="PDB" id="1QW6">
    <property type="method" value="X-ray"/>
    <property type="resolution" value="2.10 A"/>
    <property type="chains" value="A=298-716"/>
</dbReference>
<dbReference type="PDB" id="1QWC">
    <property type="method" value="X-ray"/>
    <property type="resolution" value="2.30 A"/>
    <property type="chains" value="A=298-716"/>
</dbReference>
<dbReference type="PDB" id="1RS6">
    <property type="method" value="X-ray"/>
    <property type="resolution" value="1.95 A"/>
    <property type="chains" value="A/B=297-717"/>
</dbReference>
<dbReference type="PDB" id="1RS7">
    <property type="method" value="X-ray"/>
    <property type="resolution" value="1.95 A"/>
    <property type="chains" value="A/B=297-717"/>
</dbReference>
<dbReference type="PDB" id="1TLL">
    <property type="method" value="X-ray"/>
    <property type="resolution" value="2.30 A"/>
    <property type="chains" value="A/B=742-1429"/>
</dbReference>
<dbReference type="PDB" id="1VAG">
    <property type="method" value="X-ray"/>
    <property type="resolution" value="2.00 A"/>
    <property type="chains" value="A=298-716"/>
</dbReference>
<dbReference type="PDB" id="1ZVI">
    <property type="method" value="X-ray"/>
    <property type="resolution" value="2.00 A"/>
    <property type="chains" value="A=298-716"/>
</dbReference>
<dbReference type="PDB" id="1ZVL">
    <property type="method" value="X-ray"/>
    <property type="resolution" value="2.50 A"/>
    <property type="chains" value="A/B=298-716"/>
</dbReference>
<dbReference type="PDB" id="1ZZQ">
    <property type="method" value="X-ray"/>
    <property type="resolution" value="1.90 A"/>
    <property type="chains" value="A/B=299-718"/>
</dbReference>
<dbReference type="PDB" id="1ZZR">
    <property type="method" value="X-ray"/>
    <property type="resolution" value="2.05 A"/>
    <property type="chains" value="A/B=299-718"/>
</dbReference>
<dbReference type="PDB" id="1ZZU">
    <property type="method" value="X-ray"/>
    <property type="resolution" value="1.90 A"/>
    <property type="chains" value="A/B=299-718"/>
</dbReference>
<dbReference type="PDB" id="2G6H">
    <property type="method" value="X-ray"/>
    <property type="resolution" value="2.00 A"/>
    <property type="chains" value="A/B=299-718"/>
</dbReference>
<dbReference type="PDB" id="2G6I">
    <property type="method" value="X-ray"/>
    <property type="resolution" value="1.90 A"/>
    <property type="chains" value="A/B=299-718"/>
</dbReference>
<dbReference type="PDB" id="2G6J">
    <property type="method" value="X-ray"/>
    <property type="resolution" value="2.30 A"/>
    <property type="chains" value="A/B=299-718"/>
</dbReference>
<dbReference type="PDB" id="2G6K">
    <property type="method" value="X-ray"/>
    <property type="resolution" value="2.00 A"/>
    <property type="chains" value="A/B=299-718"/>
</dbReference>
<dbReference type="PDB" id="2G6L">
    <property type="method" value="X-ray"/>
    <property type="resolution" value="2.05 A"/>
    <property type="chains" value="A/B=299-718"/>
</dbReference>
<dbReference type="PDB" id="2G6M">
    <property type="method" value="X-ray"/>
    <property type="resolution" value="1.85 A"/>
    <property type="chains" value="A/B=299-718"/>
</dbReference>
<dbReference type="PDB" id="2G6N">
    <property type="method" value="X-ray"/>
    <property type="resolution" value="1.90 A"/>
    <property type="chains" value="A/B=299-718"/>
</dbReference>
<dbReference type="PDB" id="2HX3">
    <property type="method" value="X-ray"/>
    <property type="resolution" value="2.00 A"/>
    <property type="chains" value="A/B=297-718"/>
</dbReference>
<dbReference type="PDB" id="2HX4">
    <property type="method" value="X-ray"/>
    <property type="resolution" value="2.15 A"/>
    <property type="chains" value="A/B=297-718"/>
</dbReference>
<dbReference type="PDB" id="3B3M">
    <property type="method" value="X-ray"/>
    <property type="resolution" value="1.95 A"/>
    <property type="chains" value="A/B=297-718"/>
</dbReference>
<dbReference type="PDB" id="3B3N">
    <property type="method" value="X-ray"/>
    <property type="resolution" value="1.98 A"/>
    <property type="chains" value="A/B=297-718"/>
</dbReference>
<dbReference type="PDB" id="3B3O">
    <property type="method" value="X-ray"/>
    <property type="resolution" value="2.05 A"/>
    <property type="chains" value="A/B=297-718"/>
</dbReference>
<dbReference type="PDB" id="3B3P">
    <property type="method" value="X-ray"/>
    <property type="resolution" value="2.45 A"/>
    <property type="chains" value="A/B=297-718"/>
</dbReference>
<dbReference type="PDB" id="3DQR">
    <property type="method" value="X-ray"/>
    <property type="resolution" value="2.40 A"/>
    <property type="chains" value="A/B=297-718"/>
</dbReference>
<dbReference type="PDB" id="3FC5">
    <property type="method" value="X-ray"/>
    <property type="resolution" value="2.59 A"/>
    <property type="chains" value="A/B=297-718"/>
</dbReference>
<dbReference type="PDB" id="3HSN">
    <property type="method" value="X-ray"/>
    <property type="resolution" value="1.91 A"/>
    <property type="chains" value="A/B=297-718"/>
</dbReference>
<dbReference type="PDB" id="3HSO">
    <property type="method" value="X-ray"/>
    <property type="resolution" value="2.02 A"/>
    <property type="chains" value="A/B=297-718"/>
</dbReference>
<dbReference type="PDB" id="3HSP">
    <property type="method" value="X-ray"/>
    <property type="resolution" value="2.20 A"/>
    <property type="chains" value="A/B=297-718"/>
</dbReference>
<dbReference type="PDB" id="3JT3">
    <property type="method" value="X-ray"/>
    <property type="resolution" value="2.15 A"/>
    <property type="chains" value="A/B=297-718"/>
</dbReference>
<dbReference type="PDB" id="3JT4">
    <property type="method" value="X-ray"/>
    <property type="resolution" value="1.80 A"/>
    <property type="chains" value="A/B=297-718"/>
</dbReference>
<dbReference type="PDB" id="3JT5">
    <property type="method" value="X-ray"/>
    <property type="resolution" value="2.10 A"/>
    <property type="chains" value="A/B=297-718"/>
</dbReference>
<dbReference type="PDB" id="3JT6">
    <property type="method" value="X-ray"/>
    <property type="resolution" value="2.20 A"/>
    <property type="chains" value="A/B=297-718"/>
</dbReference>
<dbReference type="PDB" id="3JT7">
    <property type="method" value="X-ray"/>
    <property type="resolution" value="2.10 A"/>
    <property type="chains" value="A/B=297-718"/>
</dbReference>
<dbReference type="PDB" id="3JT8">
    <property type="method" value="X-ray"/>
    <property type="resolution" value="1.95 A"/>
    <property type="chains" value="A/B=297-718"/>
</dbReference>
<dbReference type="PDB" id="3JT9">
    <property type="method" value="X-ray"/>
    <property type="resolution" value="2.10 A"/>
    <property type="chains" value="A/B=297-718"/>
</dbReference>
<dbReference type="PDB" id="3JTA">
    <property type="method" value="X-ray"/>
    <property type="resolution" value="2.18 A"/>
    <property type="chains" value="A/B=297-718"/>
</dbReference>
<dbReference type="PDB" id="3JWS">
    <property type="method" value="X-ray"/>
    <property type="resolution" value="1.95 A"/>
    <property type="chains" value="A/B=297-718"/>
</dbReference>
<dbReference type="PDB" id="3JWT">
    <property type="method" value="X-ray"/>
    <property type="resolution" value="2.01 A"/>
    <property type="chains" value="A/B=297-718"/>
</dbReference>
<dbReference type="PDB" id="3JWU">
    <property type="method" value="X-ray"/>
    <property type="resolution" value="1.93 A"/>
    <property type="chains" value="A/B=297-718"/>
</dbReference>
<dbReference type="PDB" id="3JWV">
    <property type="method" value="X-ray"/>
    <property type="resolution" value="1.98 A"/>
    <property type="chains" value="A/B=297-718"/>
</dbReference>
<dbReference type="PDB" id="3JX0">
    <property type="method" value="X-ray"/>
    <property type="resolution" value="2.20 A"/>
    <property type="chains" value="A/B=297-718"/>
</dbReference>
<dbReference type="PDB" id="3JX1">
    <property type="method" value="X-ray"/>
    <property type="resolution" value="2.00 A"/>
    <property type="chains" value="A/B=297-718"/>
</dbReference>
<dbReference type="PDB" id="3JX2">
    <property type="method" value="X-ray"/>
    <property type="resolution" value="2.10 A"/>
    <property type="chains" value="A/B=297-718"/>
</dbReference>
<dbReference type="PDB" id="3JX3">
    <property type="method" value="X-ray"/>
    <property type="resolution" value="1.95 A"/>
    <property type="chains" value="A/B=297-718"/>
</dbReference>
<dbReference type="PDB" id="3JX4">
    <property type="method" value="X-ray"/>
    <property type="resolution" value="2.26 A"/>
    <property type="chains" value="A/B=297-718"/>
</dbReference>
<dbReference type="PDB" id="3JX5">
    <property type="method" value="X-ray"/>
    <property type="resolution" value="2.15 A"/>
    <property type="chains" value="A/B=297-718"/>
</dbReference>
<dbReference type="PDB" id="3JX6">
    <property type="method" value="X-ray"/>
    <property type="resolution" value="2.35 A"/>
    <property type="chains" value="A/B=297-718"/>
</dbReference>
<dbReference type="PDB" id="3N2R">
    <property type="method" value="X-ray"/>
    <property type="resolution" value="1.90 A"/>
    <property type="chains" value="A/B=297-718"/>
</dbReference>
<dbReference type="PDB" id="3N5V">
    <property type="method" value="X-ray"/>
    <property type="resolution" value="2.30 A"/>
    <property type="chains" value="A/B=297-718"/>
</dbReference>
<dbReference type="PDB" id="3N5W">
    <property type="method" value="X-ray"/>
    <property type="resolution" value="1.73 A"/>
    <property type="chains" value="A/B=297-718"/>
</dbReference>
<dbReference type="PDB" id="3N5X">
    <property type="method" value="X-ray"/>
    <property type="resolution" value="1.80 A"/>
    <property type="chains" value="A/B=297-718"/>
</dbReference>
<dbReference type="PDB" id="3N5Y">
    <property type="method" value="X-ray"/>
    <property type="resolution" value="2.05 A"/>
    <property type="chains" value="A/B=297-718"/>
</dbReference>
<dbReference type="PDB" id="3N5Z">
    <property type="method" value="X-ray"/>
    <property type="resolution" value="2.18 A"/>
    <property type="chains" value="A/B=297-718"/>
</dbReference>
<dbReference type="PDB" id="3N60">
    <property type="method" value="X-ray"/>
    <property type="resolution" value="1.98 A"/>
    <property type="chains" value="A/B=297-718"/>
</dbReference>
<dbReference type="PDB" id="3N61">
    <property type="method" value="X-ray"/>
    <property type="resolution" value="1.95 A"/>
    <property type="chains" value="A/B=297-718"/>
</dbReference>
<dbReference type="PDB" id="3N62">
    <property type="method" value="X-ray"/>
    <property type="resolution" value="1.95 A"/>
    <property type="chains" value="A/B=297-718"/>
</dbReference>
<dbReference type="PDB" id="3N63">
    <property type="method" value="X-ray"/>
    <property type="resolution" value="2.00 A"/>
    <property type="chains" value="A/B=297-718"/>
</dbReference>
<dbReference type="PDB" id="3N64">
    <property type="method" value="X-ray"/>
    <property type="resolution" value="1.95 A"/>
    <property type="chains" value="A/B=297-718"/>
</dbReference>
<dbReference type="PDB" id="3N65">
    <property type="method" value="X-ray"/>
    <property type="resolution" value="1.80 A"/>
    <property type="chains" value="A/B=297-718"/>
</dbReference>
<dbReference type="PDB" id="3N66">
    <property type="method" value="X-ray"/>
    <property type="resolution" value="1.78 A"/>
    <property type="chains" value="A/B=297-718"/>
</dbReference>
<dbReference type="PDB" id="3N67">
    <property type="method" value="X-ray"/>
    <property type="resolution" value="2.09 A"/>
    <property type="chains" value="A/B=298-711"/>
</dbReference>
<dbReference type="PDB" id="3N68">
    <property type="method" value="X-ray"/>
    <property type="resolution" value="2.53 A"/>
    <property type="chains" value="A/B=298-711"/>
</dbReference>
<dbReference type="PDB" id="3N69">
    <property type="method" value="X-ray"/>
    <property type="resolution" value="2.65 A"/>
    <property type="chains" value="A/B=298-711"/>
</dbReference>
<dbReference type="PDB" id="3N6A">
    <property type="method" value="X-ray"/>
    <property type="resolution" value="2.49 A"/>
    <property type="chains" value="A/B=298-711"/>
</dbReference>
<dbReference type="PDB" id="3N6B">
    <property type="method" value="X-ray"/>
    <property type="resolution" value="3.10 A"/>
    <property type="chains" value="A/B=298-711"/>
</dbReference>
<dbReference type="PDB" id="3N6C">
    <property type="method" value="X-ray"/>
    <property type="resolution" value="3.06 A"/>
    <property type="chains" value="A/B=298-711"/>
</dbReference>
<dbReference type="PDB" id="3N6D">
    <property type="method" value="X-ray"/>
    <property type="resolution" value="3.05 A"/>
    <property type="chains" value="A/B=298-711"/>
</dbReference>
<dbReference type="PDB" id="3N6E">
    <property type="method" value="X-ray"/>
    <property type="resolution" value="2.20 A"/>
    <property type="chains" value="A/B=298-711"/>
</dbReference>
<dbReference type="PDB" id="3N6F">
    <property type="method" value="X-ray"/>
    <property type="resolution" value="2.18 A"/>
    <property type="chains" value="A/B=298-711"/>
</dbReference>
<dbReference type="PDB" id="3N6G">
    <property type="method" value="X-ray"/>
    <property type="resolution" value="2.21 A"/>
    <property type="chains" value="A/B=298-711"/>
</dbReference>
<dbReference type="PDB" id="3NLJ">
    <property type="method" value="X-ray"/>
    <property type="resolution" value="2.20 A"/>
    <property type="chains" value="A/B=297-718"/>
</dbReference>
<dbReference type="PDB" id="3NLK">
    <property type="method" value="X-ray"/>
    <property type="resolution" value="2.02 A"/>
    <property type="chains" value="A/B=297-718"/>
</dbReference>
<dbReference type="PDB" id="3NLM">
    <property type="method" value="X-ray"/>
    <property type="resolution" value="1.85 A"/>
    <property type="chains" value="A/B=297-718"/>
</dbReference>
<dbReference type="PDB" id="3NLN">
    <property type="method" value="X-ray"/>
    <property type="resolution" value="2.00 A"/>
    <property type="chains" value="A/B=297-718"/>
</dbReference>
<dbReference type="PDB" id="3NLO">
    <property type="method" value="X-ray"/>
    <property type="resolution" value="2.30 A"/>
    <property type="chains" value="A/B=297-718"/>
</dbReference>
<dbReference type="PDB" id="3NLP">
    <property type="method" value="X-ray"/>
    <property type="resolution" value="2.02 A"/>
    <property type="chains" value="A/B=297-718"/>
</dbReference>
<dbReference type="PDB" id="3NLQ">
    <property type="method" value="X-ray"/>
    <property type="resolution" value="2.15 A"/>
    <property type="chains" value="A/B=297-718"/>
</dbReference>
<dbReference type="PDB" id="3NLR">
    <property type="method" value="X-ray"/>
    <property type="resolution" value="2.10 A"/>
    <property type="chains" value="A/B=297-718"/>
</dbReference>
<dbReference type="PDB" id="3NLV">
    <property type="method" value="X-ray"/>
    <property type="resolution" value="2.10 A"/>
    <property type="chains" value="A/B=297-718"/>
</dbReference>
<dbReference type="PDB" id="3NLW">
    <property type="method" value="X-ray"/>
    <property type="resolution" value="2.10 A"/>
    <property type="chains" value="A/B=297-718"/>
</dbReference>
<dbReference type="PDB" id="3NLX">
    <property type="method" value="X-ray"/>
    <property type="resolution" value="1.87 A"/>
    <property type="chains" value="A/B=297-718"/>
</dbReference>
<dbReference type="PDB" id="3NLY">
    <property type="method" value="X-ray"/>
    <property type="resolution" value="1.99 A"/>
    <property type="chains" value="A/B=297-718"/>
</dbReference>
<dbReference type="PDB" id="3NLZ">
    <property type="method" value="X-ray"/>
    <property type="resolution" value="1.92 A"/>
    <property type="chains" value="A/B=297-718"/>
</dbReference>
<dbReference type="PDB" id="3NM0">
    <property type="method" value="X-ray"/>
    <property type="resolution" value="1.81 A"/>
    <property type="chains" value="A/B=297-718"/>
</dbReference>
<dbReference type="PDB" id="3NNY">
    <property type="method" value="X-ray"/>
    <property type="resolution" value="2.10 A"/>
    <property type="chains" value="A/B=297-718"/>
</dbReference>
<dbReference type="PDB" id="3NNZ">
    <property type="method" value="X-ray"/>
    <property type="resolution" value="1.97 A"/>
    <property type="chains" value="A/B=297-718"/>
</dbReference>
<dbReference type="PDB" id="3PNE">
    <property type="method" value="X-ray"/>
    <property type="resolution" value="1.97 A"/>
    <property type="chains" value="A/B=297-718"/>
</dbReference>
<dbReference type="PDB" id="3PNF">
    <property type="method" value="X-ray"/>
    <property type="resolution" value="1.94 A"/>
    <property type="chains" value="A/B=297-718"/>
</dbReference>
<dbReference type="PDB" id="3PNG">
    <property type="method" value="X-ray"/>
    <property type="resolution" value="1.88 A"/>
    <property type="chains" value="A/B=297-718"/>
</dbReference>
<dbReference type="PDB" id="3Q99">
    <property type="method" value="X-ray"/>
    <property type="resolution" value="2.15 A"/>
    <property type="chains" value="A/B=297-718"/>
</dbReference>
<dbReference type="PDB" id="3Q9A">
    <property type="method" value="X-ray"/>
    <property type="resolution" value="2.24 A"/>
    <property type="chains" value="A/B=297-718"/>
</dbReference>
<dbReference type="PDB" id="3RQJ">
    <property type="method" value="X-ray"/>
    <property type="resolution" value="1.84 A"/>
    <property type="chains" value="A/B=297-718"/>
</dbReference>
<dbReference type="PDB" id="3RQK">
    <property type="method" value="X-ray"/>
    <property type="resolution" value="2.21 A"/>
    <property type="chains" value="A/B=297-718"/>
</dbReference>
<dbReference type="PDB" id="3RQL">
    <property type="method" value="X-ray"/>
    <property type="resolution" value="1.93 A"/>
    <property type="chains" value="A/B=297-718"/>
</dbReference>
<dbReference type="PDB" id="3RQM">
    <property type="method" value="X-ray"/>
    <property type="resolution" value="1.95 A"/>
    <property type="chains" value="A/B=297-718"/>
</dbReference>
<dbReference type="PDB" id="3RQN">
    <property type="method" value="X-ray"/>
    <property type="resolution" value="1.95 A"/>
    <property type="chains" value="A/B=297-718"/>
</dbReference>
<dbReference type="PDB" id="3SVP">
    <property type="method" value="X-ray"/>
    <property type="resolution" value="2.05 A"/>
    <property type="chains" value="A/B=297-718"/>
</dbReference>
<dbReference type="PDB" id="3SVQ">
    <property type="method" value="X-ray"/>
    <property type="resolution" value="2.18 A"/>
    <property type="chains" value="A/B=297-718"/>
</dbReference>
<dbReference type="PDB" id="3TYL">
    <property type="method" value="X-ray"/>
    <property type="resolution" value="1.90 A"/>
    <property type="chains" value="A/B=297-718"/>
</dbReference>
<dbReference type="PDB" id="3TYM">
    <property type="method" value="X-ray"/>
    <property type="resolution" value="2.00 A"/>
    <property type="chains" value="A/B=297-718"/>
</dbReference>
<dbReference type="PDB" id="3TYN">
    <property type="method" value="X-ray"/>
    <property type="resolution" value="1.97 A"/>
    <property type="chains" value="A/B=297-718"/>
</dbReference>
<dbReference type="PDB" id="3TYO">
    <property type="method" value="X-ray"/>
    <property type="resolution" value="1.93 A"/>
    <property type="chains" value="A/B=297-718"/>
</dbReference>
<dbReference type="PDB" id="3UFO">
    <property type="method" value="X-ray"/>
    <property type="resolution" value="2.17 A"/>
    <property type="chains" value="A/B=297-718"/>
</dbReference>
<dbReference type="PDB" id="3UFP">
    <property type="method" value="X-ray"/>
    <property type="resolution" value="2.10 A"/>
    <property type="chains" value="A/B=297-718"/>
</dbReference>
<dbReference type="PDB" id="3UFQ">
    <property type="method" value="X-ray"/>
    <property type="resolution" value="2.06 A"/>
    <property type="chains" value="A/B=297-718"/>
</dbReference>
<dbReference type="PDB" id="3UFR">
    <property type="method" value="X-ray"/>
    <property type="resolution" value="2.10 A"/>
    <property type="chains" value="A/B=297-718"/>
</dbReference>
<dbReference type="PDB" id="3UFS">
    <property type="method" value="X-ray"/>
    <property type="resolution" value="1.97 A"/>
    <property type="chains" value="A/B=297-718"/>
</dbReference>
<dbReference type="PDB" id="3UFT">
    <property type="method" value="X-ray"/>
    <property type="resolution" value="2.08 A"/>
    <property type="chains" value="A/B=297-718"/>
</dbReference>
<dbReference type="PDB" id="3UFU">
    <property type="method" value="X-ray"/>
    <property type="resolution" value="1.89 A"/>
    <property type="chains" value="A/B=297-718"/>
</dbReference>
<dbReference type="PDB" id="3UFV">
    <property type="method" value="X-ray"/>
    <property type="resolution" value="2.08 A"/>
    <property type="chains" value="A/B=297-718"/>
</dbReference>
<dbReference type="PDB" id="3UFW">
    <property type="method" value="X-ray"/>
    <property type="resolution" value="2.00 A"/>
    <property type="chains" value="A/B=297-718"/>
</dbReference>
<dbReference type="PDB" id="4C39">
    <property type="method" value="X-ray"/>
    <property type="resolution" value="1.98 A"/>
    <property type="chains" value="A/B=297-718"/>
</dbReference>
<dbReference type="PDB" id="4CAM">
    <property type="method" value="X-ray"/>
    <property type="resolution" value="1.83 A"/>
    <property type="chains" value="A/B=297-718"/>
</dbReference>
<dbReference type="PDB" id="4CAN">
    <property type="method" value="X-ray"/>
    <property type="resolution" value="1.91 A"/>
    <property type="chains" value="A/B=297-718"/>
</dbReference>
<dbReference type="PDB" id="4CAO">
    <property type="method" value="X-ray"/>
    <property type="resolution" value="1.98 A"/>
    <property type="chains" value="A/B=297-718"/>
</dbReference>
<dbReference type="PDB" id="4CAP">
    <property type="method" value="X-ray"/>
    <property type="resolution" value="2.06 A"/>
    <property type="chains" value="A/B=297-718"/>
</dbReference>
<dbReference type="PDB" id="4CAQ">
    <property type="method" value="X-ray"/>
    <property type="resolution" value="1.95 A"/>
    <property type="chains" value="A/B=297-718"/>
</dbReference>
<dbReference type="PDB" id="4CDT">
    <property type="method" value="X-ray"/>
    <property type="resolution" value="2.00 A"/>
    <property type="chains" value="A/B=297-718"/>
</dbReference>
<dbReference type="PDB" id="4CTP">
    <property type="method" value="X-ray"/>
    <property type="resolution" value="2.05 A"/>
    <property type="chains" value="A/B=297-718"/>
</dbReference>
<dbReference type="PDB" id="4CTQ">
    <property type="method" value="X-ray"/>
    <property type="resolution" value="2.00 A"/>
    <property type="chains" value="A/B=297-718"/>
</dbReference>
<dbReference type="PDB" id="4CTR">
    <property type="method" value="X-ray"/>
    <property type="resolution" value="2.20 A"/>
    <property type="chains" value="A/B=297-718"/>
</dbReference>
<dbReference type="PDB" id="4CTT">
    <property type="method" value="X-ray"/>
    <property type="resolution" value="2.30 A"/>
    <property type="chains" value="A/B=297-718"/>
</dbReference>
<dbReference type="PDB" id="4CTU">
    <property type="method" value="X-ray"/>
    <property type="resolution" value="2.16 A"/>
    <property type="chains" value="A/B=297-718"/>
</dbReference>
<dbReference type="PDB" id="4CTV">
    <property type="method" value="X-ray"/>
    <property type="resolution" value="1.78 A"/>
    <property type="chains" value="A/B=297-718"/>
</dbReference>
<dbReference type="PDB" id="4CTW">
    <property type="method" value="X-ray"/>
    <property type="resolution" value="1.90 A"/>
    <property type="chains" value="A/B=297-718"/>
</dbReference>
<dbReference type="PDB" id="4CTX">
    <property type="method" value="X-ray"/>
    <property type="resolution" value="1.82 A"/>
    <property type="chains" value="A/B=297-718"/>
</dbReference>
<dbReference type="PDB" id="4CX3">
    <property type="method" value="X-ray"/>
    <property type="resolution" value="1.97 A"/>
    <property type="chains" value="A/B=297-718"/>
</dbReference>
<dbReference type="PDB" id="4CX4">
    <property type="method" value="X-ray"/>
    <property type="resolution" value="1.98 A"/>
    <property type="chains" value="A/B=297-718"/>
</dbReference>
<dbReference type="PDB" id="4CX5">
    <property type="method" value="X-ray"/>
    <property type="resolution" value="1.80 A"/>
    <property type="chains" value="A/B=297-718"/>
</dbReference>
<dbReference type="PDB" id="4CX6">
    <property type="method" value="X-ray"/>
    <property type="resolution" value="1.90 A"/>
    <property type="chains" value="A/B=297-718"/>
</dbReference>
<dbReference type="PDB" id="4D2Y">
    <property type="method" value="X-ray"/>
    <property type="resolution" value="1.98 A"/>
    <property type="chains" value="A/B=297-718"/>
</dbReference>
<dbReference type="PDB" id="4D2Z">
    <property type="method" value="X-ray"/>
    <property type="resolution" value="1.89 A"/>
    <property type="chains" value="A/B=297-718"/>
</dbReference>
<dbReference type="PDB" id="4D30">
    <property type="method" value="X-ray"/>
    <property type="resolution" value="1.96 A"/>
    <property type="chains" value="A/B=297-718"/>
</dbReference>
<dbReference type="PDB" id="4D31">
    <property type="method" value="X-ray"/>
    <property type="resolution" value="1.95 A"/>
    <property type="chains" value="A/B=297-718"/>
</dbReference>
<dbReference type="PDB" id="4D32">
    <property type="method" value="X-ray"/>
    <property type="resolution" value="2.10 A"/>
    <property type="chains" value="A/B=297-718"/>
</dbReference>
<dbReference type="PDB" id="4D3B">
    <property type="method" value="X-ray"/>
    <property type="resolution" value="1.80 A"/>
    <property type="chains" value="A/B=297-718"/>
</dbReference>
<dbReference type="PDB" id="4D7O">
    <property type="method" value="X-ray"/>
    <property type="resolution" value="1.78 A"/>
    <property type="chains" value="A/B=297-718"/>
</dbReference>
<dbReference type="PDB" id="4EUX">
    <property type="method" value="X-ray"/>
    <property type="resolution" value="2.14 A"/>
    <property type="chains" value="A/B=297-718"/>
</dbReference>
<dbReference type="PDB" id="4FVW">
    <property type="method" value="X-ray"/>
    <property type="resolution" value="1.81 A"/>
    <property type="chains" value="A/B=297-718"/>
</dbReference>
<dbReference type="PDB" id="4FVX">
    <property type="method" value="X-ray"/>
    <property type="resolution" value="2.00 A"/>
    <property type="chains" value="A/B=297-718"/>
</dbReference>
<dbReference type="PDB" id="4FVY">
    <property type="method" value="X-ray"/>
    <property type="resolution" value="1.70 A"/>
    <property type="chains" value="A/B=297-718"/>
</dbReference>
<dbReference type="PDB" id="4FVZ">
    <property type="method" value="X-ray"/>
    <property type="resolution" value="1.99 A"/>
    <property type="chains" value="A/B=297-718"/>
</dbReference>
<dbReference type="PDB" id="4FW0">
    <property type="method" value="X-ray"/>
    <property type="resolution" value="1.95 A"/>
    <property type="chains" value="A/B=297-718"/>
</dbReference>
<dbReference type="PDB" id="4GQE">
    <property type="method" value="X-ray"/>
    <property type="resolution" value="1.80 A"/>
    <property type="chains" value="A/B=297-718"/>
</dbReference>
<dbReference type="PDB" id="4HOP">
    <property type="method" value="X-ray"/>
    <property type="resolution" value="2.29 A"/>
    <property type="chains" value="B/D/F=4-126"/>
</dbReference>
<dbReference type="PDB" id="4IMS">
    <property type="method" value="X-ray"/>
    <property type="resolution" value="2.15 A"/>
    <property type="chains" value="A/B=297-718"/>
</dbReference>
<dbReference type="PDB" id="4IMT">
    <property type="method" value="X-ray"/>
    <property type="resolution" value="2.20 A"/>
    <property type="chains" value="A/B=297-718"/>
</dbReference>
<dbReference type="PDB" id="4IMU">
    <property type="method" value="X-ray"/>
    <property type="resolution" value="2.03 A"/>
    <property type="chains" value="A/B=297-718"/>
</dbReference>
<dbReference type="PDB" id="4IMW">
    <property type="method" value="X-ray"/>
    <property type="resolution" value="2.20 A"/>
    <property type="chains" value="A/B=297-718"/>
</dbReference>
<dbReference type="PDB" id="4JSE">
    <property type="method" value="X-ray"/>
    <property type="resolution" value="1.97 A"/>
    <property type="chains" value="A/B=297-718"/>
</dbReference>
<dbReference type="PDB" id="4JSF">
    <property type="method" value="X-ray"/>
    <property type="resolution" value="2.05 A"/>
    <property type="chains" value="A/B=297-718"/>
</dbReference>
<dbReference type="PDB" id="4JSG">
    <property type="method" value="X-ray"/>
    <property type="resolution" value="1.94 A"/>
    <property type="chains" value="A/B=297-718"/>
</dbReference>
<dbReference type="PDB" id="4JSH">
    <property type="method" value="X-ray"/>
    <property type="resolution" value="2.35 A"/>
    <property type="chains" value="A/B=297-718"/>
</dbReference>
<dbReference type="PDB" id="4JSI">
    <property type="method" value="X-ray"/>
    <property type="resolution" value="2.09 A"/>
    <property type="chains" value="A/B=297-718"/>
</dbReference>
<dbReference type="PDB" id="4JSJ">
    <property type="method" value="X-ray"/>
    <property type="resolution" value="1.92 A"/>
    <property type="chains" value="A/B=297-718"/>
</dbReference>
<dbReference type="PDB" id="4K5D">
    <property type="method" value="X-ray"/>
    <property type="resolution" value="2.10 A"/>
    <property type="chains" value="A/B=297-718"/>
</dbReference>
<dbReference type="PDB" id="4K5E">
    <property type="method" value="X-ray"/>
    <property type="resolution" value="1.89 A"/>
    <property type="chains" value="A/B=297-718"/>
</dbReference>
<dbReference type="PDB" id="4K5F">
    <property type="method" value="X-ray"/>
    <property type="resolution" value="2.20 A"/>
    <property type="chains" value="A/B=297-718"/>
</dbReference>
<dbReference type="PDB" id="4K5G">
    <property type="method" value="X-ray"/>
    <property type="resolution" value="1.85 A"/>
    <property type="chains" value="A/B=297-718"/>
</dbReference>
<dbReference type="PDB" id="4KCH">
    <property type="method" value="X-ray"/>
    <property type="resolution" value="2.15 A"/>
    <property type="chains" value="A/B=297-718"/>
</dbReference>
<dbReference type="PDB" id="4KCI">
    <property type="method" value="X-ray"/>
    <property type="resolution" value="2.27 A"/>
    <property type="chains" value="A/B=297-718"/>
</dbReference>
<dbReference type="PDB" id="4KCJ">
    <property type="method" value="X-ray"/>
    <property type="resolution" value="2.05 A"/>
    <property type="chains" value="A/B=297-718"/>
</dbReference>
<dbReference type="PDB" id="4KCK">
    <property type="method" value="X-ray"/>
    <property type="resolution" value="2.10 A"/>
    <property type="chains" value="A/B=297-718"/>
</dbReference>
<dbReference type="PDB" id="4KCL">
    <property type="method" value="X-ray"/>
    <property type="resolution" value="1.93 A"/>
    <property type="chains" value="A/B=297-718"/>
</dbReference>
<dbReference type="PDB" id="4KCM">
    <property type="method" value="X-ray"/>
    <property type="resolution" value="2.07 A"/>
    <property type="chains" value="A/B=297-718"/>
</dbReference>
<dbReference type="PDB" id="4KCN">
    <property type="method" value="X-ray"/>
    <property type="resolution" value="1.85 A"/>
    <property type="chains" value="A/B=297-718"/>
</dbReference>
<dbReference type="PDB" id="4KCO">
    <property type="method" value="X-ray"/>
    <property type="resolution" value="1.86 A"/>
    <property type="chains" value="A/B=297-718"/>
</dbReference>
<dbReference type="PDB" id="4LUX">
    <property type="method" value="X-ray"/>
    <property type="resolution" value="1.86 A"/>
    <property type="chains" value="A/B=297-718"/>
</dbReference>
<dbReference type="PDB" id="4UGZ">
    <property type="method" value="X-ray"/>
    <property type="resolution" value="2.08 A"/>
    <property type="chains" value="A/B=297-718"/>
</dbReference>
<dbReference type="PDB" id="4UH0">
    <property type="method" value="X-ray"/>
    <property type="resolution" value="2.04 A"/>
    <property type="chains" value="A/B=297-718"/>
</dbReference>
<dbReference type="PDB" id="4UH1">
    <property type="method" value="X-ray"/>
    <property type="resolution" value="1.80 A"/>
    <property type="chains" value="A/B=297-718"/>
</dbReference>
<dbReference type="PDB" id="4UH2">
    <property type="method" value="X-ray"/>
    <property type="resolution" value="1.99 A"/>
    <property type="chains" value="A/B=297-718"/>
</dbReference>
<dbReference type="PDB" id="4UH3">
    <property type="method" value="X-ray"/>
    <property type="resolution" value="2.03 A"/>
    <property type="chains" value="A/B=297-718"/>
</dbReference>
<dbReference type="PDB" id="4UH4">
    <property type="method" value="X-ray"/>
    <property type="resolution" value="1.95 A"/>
    <property type="chains" value="A/B=297-718"/>
</dbReference>
<dbReference type="PDB" id="4UPM">
    <property type="method" value="X-ray"/>
    <property type="resolution" value="1.90 A"/>
    <property type="chains" value="A/B=297-718"/>
</dbReference>
<dbReference type="PDB" id="4UPN">
    <property type="method" value="X-ray"/>
    <property type="resolution" value="2.09 A"/>
    <property type="chains" value="A/B=297-718"/>
</dbReference>
<dbReference type="PDB" id="4UPO">
    <property type="method" value="X-ray"/>
    <property type="resolution" value="1.95 A"/>
    <property type="chains" value="A/B=297-718"/>
</dbReference>
<dbReference type="PDB" id="4UPP">
    <property type="method" value="X-ray"/>
    <property type="resolution" value="1.91 A"/>
    <property type="chains" value="A/B=297-718"/>
</dbReference>
<dbReference type="PDB" id="4V3V">
    <property type="method" value="X-ray"/>
    <property type="resolution" value="2.06 A"/>
    <property type="chains" value="A/B=297-718"/>
</dbReference>
<dbReference type="PDB" id="4V3W">
    <property type="method" value="X-ray"/>
    <property type="resolution" value="2.13 A"/>
    <property type="chains" value="A/B=297-718"/>
</dbReference>
<dbReference type="PDB" id="4V3X">
    <property type="method" value="X-ray"/>
    <property type="resolution" value="1.99 A"/>
    <property type="chains" value="A/B=297-718"/>
</dbReference>
<dbReference type="PDB" id="4V3Y">
    <property type="method" value="X-ray"/>
    <property type="resolution" value="1.96 A"/>
    <property type="chains" value="A/B=297-718"/>
</dbReference>
<dbReference type="PDB" id="4V3Z">
    <property type="method" value="X-ray"/>
    <property type="resolution" value="2.05 A"/>
    <property type="chains" value="A/B=297-718"/>
</dbReference>
<dbReference type="PDB" id="5AD4">
    <property type="method" value="X-ray"/>
    <property type="resolution" value="1.98 A"/>
    <property type="chains" value="A/B=297-718"/>
</dbReference>
<dbReference type="PDB" id="5AD5">
    <property type="method" value="X-ray"/>
    <property type="resolution" value="1.90 A"/>
    <property type="chains" value="A/B=297-718"/>
</dbReference>
<dbReference type="PDB" id="5AD6">
    <property type="method" value="X-ray"/>
    <property type="resolution" value="2.00 A"/>
    <property type="chains" value="A/B=297-718"/>
</dbReference>
<dbReference type="PDB" id="5AD7">
    <property type="method" value="X-ray"/>
    <property type="resolution" value="1.95 A"/>
    <property type="chains" value="A/B=297-718"/>
</dbReference>
<dbReference type="PDB" id="5AD8">
    <property type="method" value="X-ray"/>
    <property type="resolution" value="1.91 A"/>
    <property type="chains" value="A/B=297-718"/>
</dbReference>
<dbReference type="PDB" id="5AD9">
    <property type="method" value="X-ray"/>
    <property type="resolution" value="2.30 A"/>
    <property type="chains" value="A/B=297-718"/>
</dbReference>
<dbReference type="PDB" id="5ADA">
    <property type="method" value="X-ray"/>
    <property type="resolution" value="1.98 A"/>
    <property type="chains" value="A/B=297-718"/>
</dbReference>
<dbReference type="PDB" id="5ADB">
    <property type="method" value="X-ray"/>
    <property type="resolution" value="2.05 A"/>
    <property type="chains" value="A/B=297-718"/>
</dbReference>
<dbReference type="PDB" id="5ADC">
    <property type="method" value="X-ray"/>
    <property type="resolution" value="2.10 A"/>
    <property type="chains" value="A/B=297-718"/>
</dbReference>
<dbReference type="PDB" id="5ADD">
    <property type="method" value="X-ray"/>
    <property type="resolution" value="2.10 A"/>
    <property type="chains" value="A/B=297-718"/>
</dbReference>
<dbReference type="PDB" id="5ADE">
    <property type="method" value="X-ray"/>
    <property type="resolution" value="2.10 A"/>
    <property type="chains" value="A/B=297-718"/>
</dbReference>
<dbReference type="PDB" id="5AGK">
    <property type="method" value="X-ray"/>
    <property type="resolution" value="2.00 A"/>
    <property type="chains" value="A/B=297-718"/>
</dbReference>
<dbReference type="PDB" id="5AGL">
    <property type="method" value="X-ray"/>
    <property type="resolution" value="1.94 A"/>
    <property type="chains" value="A/B=297-718"/>
</dbReference>
<dbReference type="PDB" id="5AGM">
    <property type="method" value="X-ray"/>
    <property type="resolution" value="1.84 A"/>
    <property type="chains" value="A/B=297-718"/>
</dbReference>
<dbReference type="PDB" id="5AGN">
    <property type="method" value="X-ray"/>
    <property type="resolution" value="1.95 A"/>
    <property type="chains" value="A/B=297-718"/>
</dbReference>
<dbReference type="PDB" id="5AGO">
    <property type="method" value="X-ray"/>
    <property type="resolution" value="1.90 A"/>
    <property type="chains" value="A/B=297-718"/>
</dbReference>
<dbReference type="PDB" id="5AGP">
    <property type="method" value="X-ray"/>
    <property type="resolution" value="2.10 A"/>
    <property type="chains" value="A/B=297-718"/>
</dbReference>
<dbReference type="PDB" id="5FVO">
    <property type="method" value="X-ray"/>
    <property type="resolution" value="2.12 A"/>
    <property type="chains" value="A=297-718"/>
</dbReference>
<dbReference type="PDB" id="5FVP">
    <property type="method" value="X-ray"/>
    <property type="resolution" value="2.10 A"/>
    <property type="chains" value="A/B=297-718"/>
</dbReference>
<dbReference type="PDB" id="5FVQ">
    <property type="method" value="X-ray"/>
    <property type="resolution" value="1.95 A"/>
    <property type="chains" value="A/B=297-718"/>
</dbReference>
<dbReference type="PDB" id="5FVR">
    <property type="method" value="X-ray"/>
    <property type="resolution" value="1.84 A"/>
    <property type="chains" value="A/B=297-718"/>
</dbReference>
<dbReference type="PDB" id="5FVS">
    <property type="method" value="X-ray"/>
    <property type="resolution" value="1.95 A"/>
    <property type="chains" value="A/B=297-718"/>
</dbReference>
<dbReference type="PDB" id="5FVT">
    <property type="method" value="X-ray"/>
    <property type="resolution" value="1.83 A"/>
    <property type="chains" value="A/B=297-718"/>
</dbReference>
<dbReference type="PDB" id="5FW0">
    <property type="method" value="X-ray"/>
    <property type="resolution" value="1.80 A"/>
    <property type="chains" value="A/B=297-718"/>
</dbReference>
<dbReference type="PDB" id="5G0N">
    <property type="method" value="X-ray"/>
    <property type="resolution" value="1.94 A"/>
    <property type="chains" value="A/B=297-718"/>
</dbReference>
<dbReference type="PDB" id="5G0O">
    <property type="method" value="X-ray"/>
    <property type="resolution" value="1.85 A"/>
    <property type="chains" value="A/B=297-718"/>
</dbReference>
<dbReference type="PDB" id="5G0P">
    <property type="method" value="X-ray"/>
    <property type="resolution" value="2.10 A"/>
    <property type="chains" value="A/B=297-718"/>
</dbReference>
<dbReference type="PDB" id="5UNR">
    <property type="method" value="X-ray"/>
    <property type="resolution" value="1.95 A"/>
    <property type="chains" value="A/B=297-718"/>
</dbReference>
<dbReference type="PDB" id="5UNS">
    <property type="method" value="X-ray"/>
    <property type="resolution" value="1.90 A"/>
    <property type="chains" value="A/B=297-718"/>
</dbReference>
<dbReference type="PDB" id="5UNT">
    <property type="method" value="X-ray"/>
    <property type="resolution" value="2.05 A"/>
    <property type="chains" value="A/B=297-718"/>
</dbReference>
<dbReference type="PDB" id="5UNU">
    <property type="method" value="X-ray"/>
    <property type="resolution" value="2.05 A"/>
    <property type="chains" value="A/B=297-718"/>
</dbReference>
<dbReference type="PDB" id="5UNV">
    <property type="method" value="X-ray"/>
    <property type="resolution" value="2.00 A"/>
    <property type="chains" value="A/B=297-718"/>
</dbReference>
<dbReference type="PDB" id="5UNW">
    <property type="method" value="X-ray"/>
    <property type="resolution" value="2.04 A"/>
    <property type="chains" value="A/B=297-718"/>
</dbReference>
<dbReference type="PDB" id="5UNX">
    <property type="method" value="X-ray"/>
    <property type="resolution" value="2.03 A"/>
    <property type="chains" value="A/B=297-718"/>
</dbReference>
<dbReference type="PDB" id="5UNY">
    <property type="method" value="X-ray"/>
    <property type="resolution" value="1.82 A"/>
    <property type="chains" value="A/B=297-718"/>
</dbReference>
<dbReference type="PDB" id="5UNZ">
    <property type="method" value="X-ray"/>
    <property type="resolution" value="1.95 A"/>
    <property type="chains" value="A/B=297-718"/>
</dbReference>
<dbReference type="PDB" id="5UO0">
    <property type="method" value="X-ray"/>
    <property type="resolution" value="1.97 A"/>
    <property type="chains" value="A/B=297-718"/>
</dbReference>
<dbReference type="PDB" id="5VUI">
    <property type="method" value="X-ray"/>
    <property type="resolution" value="2.06 A"/>
    <property type="chains" value="A/B=297-718"/>
</dbReference>
<dbReference type="PDB" id="5VUJ">
    <property type="method" value="X-ray"/>
    <property type="resolution" value="1.95 A"/>
    <property type="chains" value="A/B=297-718"/>
</dbReference>
<dbReference type="PDB" id="5VUK">
    <property type="method" value="X-ray"/>
    <property type="resolution" value="1.95 A"/>
    <property type="chains" value="A/B=297-718"/>
</dbReference>
<dbReference type="PDB" id="5VUL">
    <property type="method" value="X-ray"/>
    <property type="resolution" value="2.00 A"/>
    <property type="chains" value="A/B=297-718"/>
</dbReference>
<dbReference type="PDB" id="5VUM">
    <property type="method" value="X-ray"/>
    <property type="resolution" value="2.10 A"/>
    <property type="chains" value="A/B=297-718"/>
</dbReference>
<dbReference type="PDB" id="5VUN">
    <property type="method" value="X-ray"/>
    <property type="resolution" value="1.75 A"/>
    <property type="chains" value="A/B=297-718"/>
</dbReference>
<dbReference type="PDB" id="5VUO">
    <property type="method" value="X-ray"/>
    <property type="resolution" value="1.80 A"/>
    <property type="chains" value="A/B=297-718"/>
</dbReference>
<dbReference type="PDB" id="5VUP">
    <property type="method" value="X-ray"/>
    <property type="resolution" value="1.94 A"/>
    <property type="chains" value="A/B=297-718"/>
</dbReference>
<dbReference type="PDB" id="5VUQ">
    <property type="method" value="X-ray"/>
    <property type="resolution" value="2.00 A"/>
    <property type="chains" value="A/B=297-718"/>
</dbReference>
<dbReference type="PDB" id="5VUR">
    <property type="method" value="X-ray"/>
    <property type="resolution" value="1.97 A"/>
    <property type="chains" value="A/B=297-718"/>
</dbReference>
<dbReference type="PDB" id="5VUS">
    <property type="method" value="X-ray"/>
    <property type="resolution" value="1.95 A"/>
    <property type="chains" value="A/B=297-718"/>
</dbReference>
<dbReference type="PDB" id="5VUT">
    <property type="method" value="X-ray"/>
    <property type="resolution" value="2.00 A"/>
    <property type="chains" value="A/B=297-718"/>
</dbReference>
<dbReference type="PDB" id="5VUU">
    <property type="method" value="X-ray"/>
    <property type="resolution" value="1.96 A"/>
    <property type="chains" value="A/B=297-718"/>
</dbReference>
<dbReference type="PDB" id="6AUQ">
    <property type="method" value="X-ray"/>
    <property type="resolution" value="1.95 A"/>
    <property type="chains" value="A/B=297-718"/>
</dbReference>
<dbReference type="PDB" id="6AUR">
    <property type="method" value="X-ray"/>
    <property type="resolution" value="1.75 A"/>
    <property type="chains" value="A/B=297-718"/>
</dbReference>
<dbReference type="PDB" id="6AUS">
    <property type="method" value="X-ray"/>
    <property type="resolution" value="1.70 A"/>
    <property type="chains" value="A/B=297-718"/>
</dbReference>
<dbReference type="PDB" id="6AUT">
    <property type="method" value="X-ray"/>
    <property type="resolution" value="1.90 A"/>
    <property type="chains" value="A/B=297-718"/>
</dbReference>
<dbReference type="PDB" id="6AUU">
    <property type="method" value="X-ray"/>
    <property type="resolution" value="1.85 A"/>
    <property type="chains" value="A/B=297-718"/>
</dbReference>
<dbReference type="PDB" id="6AUV">
    <property type="method" value="X-ray"/>
    <property type="resolution" value="1.76 A"/>
    <property type="chains" value="A/B=297-718"/>
</dbReference>
<dbReference type="PDB" id="6AUW">
    <property type="method" value="X-ray"/>
    <property type="resolution" value="1.70 A"/>
    <property type="chains" value="A/B=297-718"/>
</dbReference>
<dbReference type="PDB" id="6AUX">
    <property type="method" value="X-ray"/>
    <property type="resolution" value="1.90 A"/>
    <property type="chains" value="A/B=297-718"/>
</dbReference>
<dbReference type="PDB" id="6NGJ">
    <property type="method" value="X-ray"/>
    <property type="resolution" value="1.76 A"/>
    <property type="chains" value="A/B=297-718"/>
</dbReference>
<dbReference type="PDB" id="6NGK">
    <property type="method" value="X-ray"/>
    <property type="resolution" value="1.83 A"/>
    <property type="chains" value="A/B=297-718"/>
</dbReference>
<dbReference type="PDB" id="6NGL">
    <property type="method" value="X-ray"/>
    <property type="resolution" value="1.83 A"/>
    <property type="chains" value="A/B=297-718"/>
</dbReference>
<dbReference type="PDB" id="6NGM">
    <property type="method" value="X-ray"/>
    <property type="resolution" value="1.69 A"/>
    <property type="chains" value="A/B=297-718"/>
</dbReference>
<dbReference type="PDB" id="6NGN">
    <property type="method" value="X-ray"/>
    <property type="resolution" value="1.90 A"/>
    <property type="chains" value="A/B=297-718"/>
</dbReference>
<dbReference type="PDB" id="6NGP">
    <property type="method" value="X-ray"/>
    <property type="resolution" value="1.98 A"/>
    <property type="chains" value="A/B=297-718"/>
</dbReference>
<dbReference type="PDB" id="6NGQ">
    <property type="method" value="X-ray"/>
    <property type="resolution" value="1.95 A"/>
    <property type="chains" value="A/B=297-718"/>
</dbReference>
<dbReference type="PDB" id="6NGR">
    <property type="method" value="X-ray"/>
    <property type="resolution" value="1.82 A"/>
    <property type="chains" value="A/B=297-718"/>
</dbReference>
<dbReference type="PDB" id="6NGS">
    <property type="method" value="X-ray"/>
    <property type="resolution" value="1.90 A"/>
    <property type="chains" value="A/B=297-718"/>
</dbReference>
<dbReference type="PDB" id="6NGT">
    <property type="method" value="X-ray"/>
    <property type="resolution" value="1.94 A"/>
    <property type="chains" value="A/B=297-718"/>
</dbReference>
<dbReference type="PDB" id="6NGU">
    <property type="method" value="X-ray"/>
    <property type="resolution" value="2.00 A"/>
    <property type="chains" value="A/B=297-718"/>
</dbReference>
<dbReference type="PDB" id="6NGV">
    <property type="method" value="X-ray"/>
    <property type="resolution" value="1.83 A"/>
    <property type="chains" value="A/B=297-718"/>
</dbReference>
<dbReference type="PDB" id="6NGW">
    <property type="method" value="X-ray"/>
    <property type="resolution" value="1.86 A"/>
    <property type="chains" value="A/B=297-718"/>
</dbReference>
<dbReference type="PDB" id="6NGX">
    <property type="method" value="X-ray"/>
    <property type="resolution" value="1.77 A"/>
    <property type="chains" value="A/B=297-718"/>
</dbReference>
<dbReference type="PDB" id="6NGY">
    <property type="method" value="X-ray"/>
    <property type="resolution" value="1.93 A"/>
    <property type="chains" value="A/B=297-718"/>
</dbReference>
<dbReference type="PDB" id="6NGZ">
    <property type="method" value="X-ray"/>
    <property type="resolution" value="2.00 A"/>
    <property type="chains" value="A/B=297-718"/>
</dbReference>
<dbReference type="PDB" id="6NH0">
    <property type="method" value="X-ray"/>
    <property type="resolution" value="1.90 A"/>
    <property type="chains" value="A/B=297-718"/>
</dbReference>
<dbReference type="PDB" id="6NHD">
    <property type="method" value="X-ray"/>
    <property type="resolution" value="2.10 A"/>
    <property type="chains" value="A/B=297-718"/>
</dbReference>
<dbReference type="PDB" id="6NHE">
    <property type="method" value="X-ray"/>
    <property type="resolution" value="2.00 A"/>
    <property type="chains" value="A/B=297-718"/>
</dbReference>
<dbReference type="PDB" id="6PMV">
    <property type="method" value="X-ray"/>
    <property type="resolution" value="1.80 A"/>
    <property type="chains" value="A/B=297-718"/>
</dbReference>
<dbReference type="PDB" id="6PMW">
    <property type="method" value="X-ray"/>
    <property type="resolution" value="1.75 A"/>
    <property type="chains" value="A/B=297-718"/>
</dbReference>
<dbReference type="PDB" id="6PMX">
    <property type="method" value="X-ray"/>
    <property type="resolution" value="2.05 A"/>
    <property type="chains" value="A/B=297-718"/>
</dbReference>
<dbReference type="PDB" id="6PMY">
    <property type="method" value="X-ray"/>
    <property type="resolution" value="1.95 A"/>
    <property type="chains" value="A/B=297-718"/>
</dbReference>
<dbReference type="PDB" id="6PMZ">
    <property type="method" value="X-ray"/>
    <property type="resolution" value="2.10 A"/>
    <property type="chains" value="A/B=297-718"/>
</dbReference>
<dbReference type="PDB" id="6PN0">
    <property type="method" value="X-ray"/>
    <property type="resolution" value="2.23 A"/>
    <property type="chains" value="A/B=297-718"/>
</dbReference>
<dbReference type="PDB" id="6PN1">
    <property type="method" value="X-ray"/>
    <property type="resolution" value="2.20 A"/>
    <property type="chains" value="A/B=297-718"/>
</dbReference>
<dbReference type="PDB" id="6PN2">
    <property type="method" value="X-ray"/>
    <property type="resolution" value="1.88 A"/>
    <property type="chains" value="A/B=297-718"/>
</dbReference>
<dbReference type="PDB" id="6PN3">
    <property type="method" value="X-ray"/>
    <property type="resolution" value="1.80 A"/>
    <property type="chains" value="A/B=297-718"/>
</dbReference>
<dbReference type="PDB" id="6PN4">
    <property type="method" value="X-ray"/>
    <property type="resolution" value="1.90 A"/>
    <property type="chains" value="A/B=297-718"/>
</dbReference>
<dbReference type="PDB" id="6PN5">
    <property type="method" value="X-ray"/>
    <property type="resolution" value="1.70 A"/>
    <property type="chains" value="A/B=297-718"/>
</dbReference>
<dbReference type="PDB" id="6PN6">
    <property type="method" value="X-ray"/>
    <property type="resolution" value="1.84 A"/>
    <property type="chains" value="A/B=297-718"/>
</dbReference>
<dbReference type="PDB" id="6PN7">
    <property type="method" value="X-ray"/>
    <property type="resolution" value="1.88 A"/>
    <property type="chains" value="A/B=297-718"/>
</dbReference>
<dbReference type="PDB" id="6PN8">
    <property type="method" value="X-ray"/>
    <property type="resolution" value="1.84 A"/>
    <property type="chains" value="A/B=297-718"/>
</dbReference>
<dbReference type="PDB" id="6PN9">
    <property type="method" value="X-ray"/>
    <property type="resolution" value="1.84 A"/>
    <property type="chains" value="A/B=297-718"/>
</dbReference>
<dbReference type="PDB" id="7S3X">
    <property type="method" value="X-ray"/>
    <property type="resolution" value="1.95 A"/>
    <property type="chains" value="A/B=297-718"/>
</dbReference>
<dbReference type="PDB" id="7S3Y">
    <property type="method" value="X-ray"/>
    <property type="resolution" value="2.08 A"/>
    <property type="chains" value="A/B=297-718"/>
</dbReference>
<dbReference type="PDB" id="7S3Z">
    <property type="method" value="X-ray"/>
    <property type="resolution" value="1.73 A"/>
    <property type="chains" value="A/B=297-718"/>
</dbReference>
<dbReference type="PDB" id="7S40">
    <property type="method" value="X-ray"/>
    <property type="resolution" value="1.80 A"/>
    <property type="chains" value="A/B=297-718"/>
</dbReference>
<dbReference type="PDB" id="7TS9">
    <property type="method" value="X-ray"/>
    <property type="resolution" value="1.85 A"/>
    <property type="chains" value="A=297-717"/>
</dbReference>
<dbReference type="PDB" id="7TSA">
    <property type="method" value="X-ray"/>
    <property type="resolution" value="2.03 A"/>
    <property type="chains" value="A=297-718"/>
</dbReference>
<dbReference type="PDB" id="7TSB">
    <property type="method" value="X-ray"/>
    <property type="resolution" value="1.82 A"/>
    <property type="chains" value="A=297-717"/>
</dbReference>
<dbReference type="PDB" id="7TSC">
    <property type="method" value="X-ray"/>
    <property type="resolution" value="1.80 A"/>
    <property type="chains" value="A=297-718"/>
</dbReference>
<dbReference type="PDB" id="7TSD">
    <property type="method" value="X-ray"/>
    <property type="resolution" value="1.77 A"/>
    <property type="chains" value="A=297-718"/>
</dbReference>
<dbReference type="PDB" id="7TSE">
    <property type="method" value="X-ray"/>
    <property type="resolution" value="1.85 A"/>
    <property type="chains" value="A=297-718"/>
</dbReference>
<dbReference type="PDB" id="7TSF">
    <property type="method" value="X-ray"/>
    <property type="resolution" value="1.78 A"/>
    <property type="chains" value="A/B=297-718"/>
</dbReference>
<dbReference type="PDB" id="7UAN">
    <property type="method" value="X-ray"/>
    <property type="resolution" value="1.70 A"/>
    <property type="chains" value="A=297-718"/>
</dbReference>
<dbReference type="PDB" id="8FG9">
    <property type="method" value="X-ray"/>
    <property type="resolution" value="1.95 A"/>
    <property type="chains" value="A/B=297-718"/>
</dbReference>
<dbReference type="PDB" id="8FGA">
    <property type="method" value="X-ray"/>
    <property type="resolution" value="1.89 A"/>
    <property type="chains" value="A/B=297-718"/>
</dbReference>
<dbReference type="PDB" id="8FGB">
    <property type="method" value="X-ray"/>
    <property type="resolution" value="1.91 A"/>
    <property type="chains" value="A/B=297-718"/>
</dbReference>
<dbReference type="PDB" id="8FGC">
    <property type="method" value="X-ray"/>
    <property type="resolution" value="1.78 A"/>
    <property type="chains" value="A/B=297-718"/>
</dbReference>
<dbReference type="PDB" id="8FGD">
    <property type="method" value="X-ray"/>
    <property type="resolution" value="1.78 A"/>
    <property type="chains" value="A=297-718"/>
</dbReference>
<dbReference type="PDB" id="8FGE">
    <property type="method" value="X-ray"/>
    <property type="resolution" value="1.89 A"/>
    <property type="chains" value="A=297-718"/>
</dbReference>
<dbReference type="PDB" id="8FGV">
    <property type="method" value="X-ray"/>
    <property type="resolution" value="1.85 A"/>
    <property type="chains" value="A/B=297-718"/>
</dbReference>
<dbReference type="PDB" id="8T1J">
    <property type="method" value="EM"/>
    <property type="resolution" value="2.70 A"/>
    <property type="chains" value="A/B=1-1429"/>
</dbReference>
<dbReference type="PDB" id="8T1K">
    <property type="method" value="EM"/>
    <property type="resolution" value="3.14 A"/>
    <property type="chains" value="A/B=1-1429"/>
</dbReference>
<dbReference type="PDBsum" id="1B8Q"/>
<dbReference type="PDBsum" id="1CMI"/>
<dbReference type="PDBsum" id="1F20"/>
<dbReference type="PDBsum" id="1K2R"/>
<dbReference type="PDBsum" id="1K2S"/>
<dbReference type="PDBsum" id="1K2T"/>
<dbReference type="PDBsum" id="1K2U"/>
<dbReference type="PDBsum" id="1LZX"/>
<dbReference type="PDBsum" id="1LZZ"/>
<dbReference type="PDBsum" id="1M00"/>
<dbReference type="PDBsum" id="1MMV"/>
<dbReference type="PDBsum" id="1MMW"/>
<dbReference type="PDBsum" id="1OM4"/>
<dbReference type="PDBsum" id="1OM5"/>
<dbReference type="PDBsum" id="1P6H"/>
<dbReference type="PDBsum" id="1P6I"/>
<dbReference type="PDBsum" id="1P6J"/>
<dbReference type="PDBsum" id="1P6K"/>
<dbReference type="PDBsum" id="1QAU"/>
<dbReference type="PDBsum" id="1QAV"/>
<dbReference type="PDBsum" id="1QW6"/>
<dbReference type="PDBsum" id="1QWC"/>
<dbReference type="PDBsum" id="1RS6"/>
<dbReference type="PDBsum" id="1RS7"/>
<dbReference type="PDBsum" id="1TLL"/>
<dbReference type="PDBsum" id="1VAG"/>
<dbReference type="PDBsum" id="1ZVI"/>
<dbReference type="PDBsum" id="1ZVL"/>
<dbReference type="PDBsum" id="1ZZQ"/>
<dbReference type="PDBsum" id="1ZZR"/>
<dbReference type="PDBsum" id="1ZZU"/>
<dbReference type="PDBsum" id="2G6H"/>
<dbReference type="PDBsum" id="2G6I"/>
<dbReference type="PDBsum" id="2G6J"/>
<dbReference type="PDBsum" id="2G6K"/>
<dbReference type="PDBsum" id="2G6L"/>
<dbReference type="PDBsum" id="2G6M"/>
<dbReference type="PDBsum" id="2G6N"/>
<dbReference type="PDBsum" id="2HX3"/>
<dbReference type="PDBsum" id="2HX4"/>
<dbReference type="PDBsum" id="3B3M"/>
<dbReference type="PDBsum" id="3B3N"/>
<dbReference type="PDBsum" id="3B3O"/>
<dbReference type="PDBsum" id="3B3P"/>
<dbReference type="PDBsum" id="3DQR"/>
<dbReference type="PDBsum" id="3FC5"/>
<dbReference type="PDBsum" id="3HSN"/>
<dbReference type="PDBsum" id="3HSO"/>
<dbReference type="PDBsum" id="3HSP"/>
<dbReference type="PDBsum" id="3JT3"/>
<dbReference type="PDBsum" id="3JT4"/>
<dbReference type="PDBsum" id="3JT5"/>
<dbReference type="PDBsum" id="3JT6"/>
<dbReference type="PDBsum" id="3JT7"/>
<dbReference type="PDBsum" id="3JT8"/>
<dbReference type="PDBsum" id="3JT9"/>
<dbReference type="PDBsum" id="3JTA"/>
<dbReference type="PDBsum" id="3JWS"/>
<dbReference type="PDBsum" id="3JWT"/>
<dbReference type="PDBsum" id="3JWU"/>
<dbReference type="PDBsum" id="3JWV"/>
<dbReference type="PDBsum" id="3JX0"/>
<dbReference type="PDBsum" id="3JX1"/>
<dbReference type="PDBsum" id="3JX2"/>
<dbReference type="PDBsum" id="3JX3"/>
<dbReference type="PDBsum" id="3JX4"/>
<dbReference type="PDBsum" id="3JX5"/>
<dbReference type="PDBsum" id="3JX6"/>
<dbReference type="PDBsum" id="3N2R"/>
<dbReference type="PDBsum" id="3N5V"/>
<dbReference type="PDBsum" id="3N5W"/>
<dbReference type="PDBsum" id="3N5X"/>
<dbReference type="PDBsum" id="3N5Y"/>
<dbReference type="PDBsum" id="3N5Z"/>
<dbReference type="PDBsum" id="3N60"/>
<dbReference type="PDBsum" id="3N61"/>
<dbReference type="PDBsum" id="3N62"/>
<dbReference type="PDBsum" id="3N63"/>
<dbReference type="PDBsum" id="3N64"/>
<dbReference type="PDBsum" id="3N65"/>
<dbReference type="PDBsum" id="3N66"/>
<dbReference type="PDBsum" id="3N67"/>
<dbReference type="PDBsum" id="3N68"/>
<dbReference type="PDBsum" id="3N69"/>
<dbReference type="PDBsum" id="3N6A"/>
<dbReference type="PDBsum" id="3N6B"/>
<dbReference type="PDBsum" id="3N6C"/>
<dbReference type="PDBsum" id="3N6D"/>
<dbReference type="PDBsum" id="3N6E"/>
<dbReference type="PDBsum" id="3N6F"/>
<dbReference type="PDBsum" id="3N6G"/>
<dbReference type="PDBsum" id="3NLJ"/>
<dbReference type="PDBsum" id="3NLK"/>
<dbReference type="PDBsum" id="3NLM"/>
<dbReference type="PDBsum" id="3NLN"/>
<dbReference type="PDBsum" id="3NLO"/>
<dbReference type="PDBsum" id="3NLP"/>
<dbReference type="PDBsum" id="3NLQ"/>
<dbReference type="PDBsum" id="3NLR"/>
<dbReference type="PDBsum" id="3NLV"/>
<dbReference type="PDBsum" id="3NLW"/>
<dbReference type="PDBsum" id="3NLX"/>
<dbReference type="PDBsum" id="3NLY"/>
<dbReference type="PDBsum" id="3NLZ"/>
<dbReference type="PDBsum" id="3NM0"/>
<dbReference type="PDBsum" id="3NNY"/>
<dbReference type="PDBsum" id="3NNZ"/>
<dbReference type="PDBsum" id="3PNE"/>
<dbReference type="PDBsum" id="3PNF"/>
<dbReference type="PDBsum" id="3PNG"/>
<dbReference type="PDBsum" id="3Q99"/>
<dbReference type="PDBsum" id="3Q9A"/>
<dbReference type="PDBsum" id="3RQJ"/>
<dbReference type="PDBsum" id="3RQK"/>
<dbReference type="PDBsum" id="3RQL"/>
<dbReference type="PDBsum" id="3RQM"/>
<dbReference type="PDBsum" id="3RQN"/>
<dbReference type="PDBsum" id="3SVP"/>
<dbReference type="PDBsum" id="3SVQ"/>
<dbReference type="PDBsum" id="3TYL"/>
<dbReference type="PDBsum" id="3TYM"/>
<dbReference type="PDBsum" id="3TYN"/>
<dbReference type="PDBsum" id="3TYO"/>
<dbReference type="PDBsum" id="3UFO"/>
<dbReference type="PDBsum" id="3UFP"/>
<dbReference type="PDBsum" id="3UFQ"/>
<dbReference type="PDBsum" id="3UFR"/>
<dbReference type="PDBsum" id="3UFS"/>
<dbReference type="PDBsum" id="3UFT"/>
<dbReference type="PDBsum" id="3UFU"/>
<dbReference type="PDBsum" id="3UFV"/>
<dbReference type="PDBsum" id="3UFW"/>
<dbReference type="PDBsum" id="4C39"/>
<dbReference type="PDBsum" id="4CAM"/>
<dbReference type="PDBsum" id="4CAN"/>
<dbReference type="PDBsum" id="4CAO"/>
<dbReference type="PDBsum" id="4CAP"/>
<dbReference type="PDBsum" id="4CAQ"/>
<dbReference type="PDBsum" id="4CDT"/>
<dbReference type="PDBsum" id="4CTP"/>
<dbReference type="PDBsum" id="4CTQ"/>
<dbReference type="PDBsum" id="4CTR"/>
<dbReference type="PDBsum" id="4CTT"/>
<dbReference type="PDBsum" id="4CTU"/>
<dbReference type="PDBsum" id="4CTV"/>
<dbReference type="PDBsum" id="4CTW"/>
<dbReference type="PDBsum" id="4CTX"/>
<dbReference type="PDBsum" id="4CX3"/>
<dbReference type="PDBsum" id="4CX4"/>
<dbReference type="PDBsum" id="4CX5"/>
<dbReference type="PDBsum" id="4CX6"/>
<dbReference type="PDBsum" id="4D2Y"/>
<dbReference type="PDBsum" id="4D2Z"/>
<dbReference type="PDBsum" id="4D30"/>
<dbReference type="PDBsum" id="4D31"/>
<dbReference type="PDBsum" id="4D32"/>
<dbReference type="PDBsum" id="4D3B"/>
<dbReference type="PDBsum" id="4D7O"/>
<dbReference type="PDBsum" id="4EUX"/>
<dbReference type="PDBsum" id="4FVW"/>
<dbReference type="PDBsum" id="4FVX"/>
<dbReference type="PDBsum" id="4FVY"/>
<dbReference type="PDBsum" id="4FVZ"/>
<dbReference type="PDBsum" id="4FW0"/>
<dbReference type="PDBsum" id="4GQE"/>
<dbReference type="PDBsum" id="4HOP"/>
<dbReference type="PDBsum" id="4IMS"/>
<dbReference type="PDBsum" id="4IMT"/>
<dbReference type="PDBsum" id="4IMU"/>
<dbReference type="PDBsum" id="4IMW"/>
<dbReference type="PDBsum" id="4JSE"/>
<dbReference type="PDBsum" id="4JSF"/>
<dbReference type="PDBsum" id="4JSG"/>
<dbReference type="PDBsum" id="4JSH"/>
<dbReference type="PDBsum" id="4JSI"/>
<dbReference type="PDBsum" id="4JSJ"/>
<dbReference type="PDBsum" id="4K5D"/>
<dbReference type="PDBsum" id="4K5E"/>
<dbReference type="PDBsum" id="4K5F"/>
<dbReference type="PDBsum" id="4K5G"/>
<dbReference type="PDBsum" id="4KCH"/>
<dbReference type="PDBsum" id="4KCI"/>
<dbReference type="PDBsum" id="4KCJ"/>
<dbReference type="PDBsum" id="4KCK"/>
<dbReference type="PDBsum" id="4KCL"/>
<dbReference type="PDBsum" id="4KCM"/>
<dbReference type="PDBsum" id="4KCN"/>
<dbReference type="PDBsum" id="4KCO"/>
<dbReference type="PDBsum" id="4LUX"/>
<dbReference type="PDBsum" id="4UGZ"/>
<dbReference type="PDBsum" id="4UH0"/>
<dbReference type="PDBsum" id="4UH1"/>
<dbReference type="PDBsum" id="4UH2"/>
<dbReference type="PDBsum" id="4UH3"/>
<dbReference type="PDBsum" id="4UH4"/>
<dbReference type="PDBsum" id="4UPM"/>
<dbReference type="PDBsum" id="4UPN"/>
<dbReference type="PDBsum" id="4UPO"/>
<dbReference type="PDBsum" id="4UPP"/>
<dbReference type="PDBsum" id="4V3V"/>
<dbReference type="PDBsum" id="4V3W"/>
<dbReference type="PDBsum" id="4V3X"/>
<dbReference type="PDBsum" id="4V3Y"/>
<dbReference type="PDBsum" id="4V3Z"/>
<dbReference type="PDBsum" id="5AD4"/>
<dbReference type="PDBsum" id="5AD5"/>
<dbReference type="PDBsum" id="5AD6"/>
<dbReference type="PDBsum" id="5AD7"/>
<dbReference type="PDBsum" id="5AD8"/>
<dbReference type="PDBsum" id="5AD9"/>
<dbReference type="PDBsum" id="5ADA"/>
<dbReference type="PDBsum" id="5ADB"/>
<dbReference type="PDBsum" id="5ADC"/>
<dbReference type="PDBsum" id="5ADD"/>
<dbReference type="PDBsum" id="5ADE"/>
<dbReference type="PDBsum" id="5AGK"/>
<dbReference type="PDBsum" id="5AGL"/>
<dbReference type="PDBsum" id="5AGM"/>
<dbReference type="PDBsum" id="5AGN"/>
<dbReference type="PDBsum" id="5AGO"/>
<dbReference type="PDBsum" id="5AGP"/>
<dbReference type="PDBsum" id="5FVO"/>
<dbReference type="PDBsum" id="5FVP"/>
<dbReference type="PDBsum" id="5FVQ"/>
<dbReference type="PDBsum" id="5FVR"/>
<dbReference type="PDBsum" id="5FVS"/>
<dbReference type="PDBsum" id="5FVT"/>
<dbReference type="PDBsum" id="5FW0"/>
<dbReference type="PDBsum" id="5G0N"/>
<dbReference type="PDBsum" id="5G0O"/>
<dbReference type="PDBsum" id="5G0P"/>
<dbReference type="PDBsum" id="5UNR"/>
<dbReference type="PDBsum" id="5UNS"/>
<dbReference type="PDBsum" id="5UNT"/>
<dbReference type="PDBsum" id="5UNU"/>
<dbReference type="PDBsum" id="5UNV"/>
<dbReference type="PDBsum" id="5UNW"/>
<dbReference type="PDBsum" id="5UNX"/>
<dbReference type="PDBsum" id="5UNY"/>
<dbReference type="PDBsum" id="5UNZ"/>
<dbReference type="PDBsum" id="5UO0"/>
<dbReference type="PDBsum" id="5VUI"/>
<dbReference type="PDBsum" id="5VUJ"/>
<dbReference type="PDBsum" id="5VUK"/>
<dbReference type="PDBsum" id="5VUL"/>
<dbReference type="PDBsum" id="5VUM"/>
<dbReference type="PDBsum" id="5VUN"/>
<dbReference type="PDBsum" id="5VUO"/>
<dbReference type="PDBsum" id="5VUP"/>
<dbReference type="PDBsum" id="5VUQ"/>
<dbReference type="PDBsum" id="5VUR"/>
<dbReference type="PDBsum" id="5VUS"/>
<dbReference type="PDBsum" id="5VUT"/>
<dbReference type="PDBsum" id="5VUU"/>
<dbReference type="PDBsum" id="6AUQ"/>
<dbReference type="PDBsum" id="6AUR"/>
<dbReference type="PDBsum" id="6AUS"/>
<dbReference type="PDBsum" id="6AUT"/>
<dbReference type="PDBsum" id="6AUU"/>
<dbReference type="PDBsum" id="6AUV"/>
<dbReference type="PDBsum" id="6AUW"/>
<dbReference type="PDBsum" id="6AUX"/>
<dbReference type="PDBsum" id="6NGJ"/>
<dbReference type="PDBsum" id="6NGK"/>
<dbReference type="PDBsum" id="6NGL"/>
<dbReference type="PDBsum" id="6NGM"/>
<dbReference type="PDBsum" id="6NGN"/>
<dbReference type="PDBsum" id="6NGP"/>
<dbReference type="PDBsum" id="6NGQ"/>
<dbReference type="PDBsum" id="6NGR"/>
<dbReference type="PDBsum" id="6NGS"/>
<dbReference type="PDBsum" id="6NGT"/>
<dbReference type="PDBsum" id="6NGU"/>
<dbReference type="PDBsum" id="6NGV"/>
<dbReference type="PDBsum" id="6NGW"/>
<dbReference type="PDBsum" id="6NGX"/>
<dbReference type="PDBsum" id="6NGY"/>
<dbReference type="PDBsum" id="6NGZ"/>
<dbReference type="PDBsum" id="6NH0"/>
<dbReference type="PDBsum" id="6NHD"/>
<dbReference type="PDBsum" id="6NHE"/>
<dbReference type="PDBsum" id="6PMV"/>
<dbReference type="PDBsum" id="6PMW"/>
<dbReference type="PDBsum" id="6PMX"/>
<dbReference type="PDBsum" id="6PMY"/>
<dbReference type="PDBsum" id="6PMZ"/>
<dbReference type="PDBsum" id="6PN0"/>
<dbReference type="PDBsum" id="6PN1"/>
<dbReference type="PDBsum" id="6PN2"/>
<dbReference type="PDBsum" id="6PN3"/>
<dbReference type="PDBsum" id="6PN4"/>
<dbReference type="PDBsum" id="6PN5"/>
<dbReference type="PDBsum" id="6PN6"/>
<dbReference type="PDBsum" id="6PN7"/>
<dbReference type="PDBsum" id="6PN8"/>
<dbReference type="PDBsum" id="6PN9"/>
<dbReference type="PDBsum" id="7S3X"/>
<dbReference type="PDBsum" id="7S3Y"/>
<dbReference type="PDBsum" id="7S3Z"/>
<dbReference type="PDBsum" id="7S40"/>
<dbReference type="PDBsum" id="7TS9"/>
<dbReference type="PDBsum" id="7TSA"/>
<dbReference type="PDBsum" id="7TSB"/>
<dbReference type="PDBsum" id="7TSC"/>
<dbReference type="PDBsum" id="7TSD"/>
<dbReference type="PDBsum" id="7TSE"/>
<dbReference type="PDBsum" id="7TSF"/>
<dbReference type="PDBsum" id="7UAN"/>
<dbReference type="PDBsum" id="8FG9"/>
<dbReference type="PDBsum" id="8FGA"/>
<dbReference type="PDBsum" id="8FGB"/>
<dbReference type="PDBsum" id="8FGC"/>
<dbReference type="PDBsum" id="8FGD"/>
<dbReference type="PDBsum" id="8FGE"/>
<dbReference type="PDBsum" id="8FGV"/>
<dbReference type="PDBsum" id="8T1J"/>
<dbReference type="PDBsum" id="8T1K"/>
<dbReference type="BMRB" id="P29476"/>
<dbReference type="EMDB" id="EMD-40969"/>
<dbReference type="EMDB" id="EMD-40970"/>
<dbReference type="SMR" id="P29476"/>
<dbReference type="BioGRID" id="246738">
    <property type="interactions" value="17"/>
</dbReference>
<dbReference type="CORUM" id="P29476"/>
<dbReference type="DIP" id="DIP-33272N"/>
<dbReference type="ELM" id="P29476"/>
<dbReference type="FunCoup" id="P29476">
    <property type="interactions" value="872"/>
</dbReference>
<dbReference type="IntAct" id="P29476">
    <property type="interactions" value="9"/>
</dbReference>
<dbReference type="MINT" id="P29476"/>
<dbReference type="STRING" id="10116.ENSRNOP00000062735"/>
<dbReference type="BindingDB" id="P29476"/>
<dbReference type="ChEMBL" id="CHEMBL3048"/>
<dbReference type="DrugCentral" id="P29476"/>
<dbReference type="GuidetoPHARMACOLOGY" id="1251"/>
<dbReference type="CarbonylDB" id="P29476"/>
<dbReference type="GlyGen" id="P29476">
    <property type="glycosylation" value="2 sites, 1 O-linked glycan (2 sites)"/>
</dbReference>
<dbReference type="iPTMnet" id="P29476"/>
<dbReference type="PhosphoSitePlus" id="P29476"/>
<dbReference type="PaxDb" id="10116-ENSRNOP00000062735"/>
<dbReference type="ABCD" id="P29476">
    <property type="antibodies" value="2 sequenced antibodies"/>
</dbReference>
<dbReference type="DNASU" id="24598"/>
<dbReference type="GeneID" id="24598"/>
<dbReference type="KEGG" id="rno:24598"/>
<dbReference type="UCSC" id="RGD:3184">
    <molecule id="P29476-1"/>
    <property type="organism name" value="rat"/>
</dbReference>
<dbReference type="AGR" id="RGD:3184"/>
<dbReference type="CTD" id="4842"/>
<dbReference type="RGD" id="3184">
    <property type="gene designation" value="Nos1"/>
</dbReference>
<dbReference type="eggNOG" id="KOG1158">
    <property type="taxonomic scope" value="Eukaryota"/>
</dbReference>
<dbReference type="InParanoid" id="P29476"/>
<dbReference type="PhylomeDB" id="P29476"/>
<dbReference type="BRENDA" id="1.14.13.39">
    <property type="organism ID" value="5301"/>
</dbReference>
<dbReference type="Reactome" id="R-RNO-1222556">
    <property type="pathway name" value="ROS and RNS production in phagocytes"/>
</dbReference>
<dbReference type="Reactome" id="R-RNO-392154">
    <property type="pathway name" value="Nitric oxide stimulates guanylate cyclase"/>
</dbReference>
<dbReference type="Reactome" id="R-RNO-5578775">
    <property type="pathway name" value="Ion homeostasis"/>
</dbReference>
<dbReference type="SABIO-RK" id="P29476"/>
<dbReference type="EvolutionaryTrace" id="P29476"/>
<dbReference type="PRO" id="PR:P29476"/>
<dbReference type="Proteomes" id="UP000002494">
    <property type="component" value="Unplaced"/>
</dbReference>
<dbReference type="GO" id="GO:0042582">
    <property type="term" value="C:azurophil granule"/>
    <property type="evidence" value="ECO:0000314"/>
    <property type="project" value="RGD"/>
</dbReference>
<dbReference type="GO" id="GO:0044305">
    <property type="term" value="C:calyx of Held"/>
    <property type="evidence" value="ECO:0000266"/>
    <property type="project" value="RGD"/>
</dbReference>
<dbReference type="GO" id="GO:0005901">
    <property type="term" value="C:caveola"/>
    <property type="evidence" value="ECO:0000266"/>
    <property type="project" value="RGD"/>
</dbReference>
<dbReference type="GO" id="GO:0071944">
    <property type="term" value="C:cell periphery"/>
    <property type="evidence" value="ECO:0000314"/>
    <property type="project" value="ARUK-UCL"/>
</dbReference>
<dbReference type="GO" id="GO:0005737">
    <property type="term" value="C:cytoplasm"/>
    <property type="evidence" value="ECO:0000314"/>
    <property type="project" value="CAFA"/>
</dbReference>
<dbReference type="GO" id="GO:0005856">
    <property type="term" value="C:cytoskeleton"/>
    <property type="evidence" value="ECO:0000266"/>
    <property type="project" value="RGD"/>
</dbReference>
<dbReference type="GO" id="GO:0005829">
    <property type="term" value="C:cytosol"/>
    <property type="evidence" value="ECO:0000318"/>
    <property type="project" value="GO_Central"/>
</dbReference>
<dbReference type="GO" id="GO:0030425">
    <property type="term" value="C:dendrite"/>
    <property type="evidence" value="ECO:0000314"/>
    <property type="project" value="RGD"/>
</dbReference>
<dbReference type="GO" id="GO:0043197">
    <property type="term" value="C:dendritic spine"/>
    <property type="evidence" value="ECO:0007669"/>
    <property type="project" value="UniProtKB-SubCell"/>
</dbReference>
<dbReference type="GO" id="GO:0098978">
    <property type="term" value="C:glutamatergic synapse"/>
    <property type="evidence" value="ECO:0000314"/>
    <property type="project" value="SynGO"/>
</dbReference>
<dbReference type="GO" id="GO:0045121">
    <property type="term" value="C:membrane raft"/>
    <property type="evidence" value="ECO:0000266"/>
    <property type="project" value="RGD"/>
</dbReference>
<dbReference type="GO" id="GO:0005741">
    <property type="term" value="C:mitochondrial outer membrane"/>
    <property type="evidence" value="ECO:0000314"/>
    <property type="project" value="RGD"/>
</dbReference>
<dbReference type="GO" id="GO:0005739">
    <property type="term" value="C:mitochondrion"/>
    <property type="evidence" value="ECO:0000314"/>
    <property type="project" value="MGI"/>
</dbReference>
<dbReference type="GO" id="GO:0031965">
    <property type="term" value="C:nuclear membrane"/>
    <property type="evidence" value="ECO:0000314"/>
    <property type="project" value="RGD"/>
</dbReference>
<dbReference type="GO" id="GO:0005634">
    <property type="term" value="C:nucleus"/>
    <property type="evidence" value="ECO:0000314"/>
    <property type="project" value="CAFA"/>
</dbReference>
<dbReference type="GO" id="GO:0048471">
    <property type="term" value="C:perinuclear region of cytoplasm"/>
    <property type="evidence" value="ECO:0000314"/>
    <property type="project" value="BHF-UCL"/>
</dbReference>
<dbReference type="GO" id="GO:0001917">
    <property type="term" value="C:photoreceptor inner segment"/>
    <property type="evidence" value="ECO:0000314"/>
    <property type="project" value="BHF-UCL"/>
</dbReference>
<dbReference type="GO" id="GO:0005886">
    <property type="term" value="C:plasma membrane"/>
    <property type="evidence" value="ECO:0000318"/>
    <property type="project" value="GO_Central"/>
</dbReference>
<dbReference type="GO" id="GO:0014069">
    <property type="term" value="C:postsynaptic density"/>
    <property type="evidence" value="ECO:0000318"/>
    <property type="project" value="GO_Central"/>
</dbReference>
<dbReference type="GO" id="GO:0099092">
    <property type="term" value="C:postsynaptic density, intracellular component"/>
    <property type="evidence" value="ECO:0000314"/>
    <property type="project" value="SynGO"/>
</dbReference>
<dbReference type="GO" id="GO:0099091">
    <property type="term" value="C:postsynaptic specialization, intracellular component"/>
    <property type="evidence" value="ECO:0000314"/>
    <property type="project" value="SynGO"/>
</dbReference>
<dbReference type="GO" id="GO:0032991">
    <property type="term" value="C:protein-containing complex"/>
    <property type="evidence" value="ECO:0000314"/>
    <property type="project" value="BHF-UCL"/>
</dbReference>
<dbReference type="GO" id="GO:0042383">
    <property type="term" value="C:sarcolemma"/>
    <property type="evidence" value="ECO:0000314"/>
    <property type="project" value="BHF-UCL"/>
</dbReference>
<dbReference type="GO" id="GO:0016529">
    <property type="term" value="C:sarcoplasmic reticulum"/>
    <property type="evidence" value="ECO:0000266"/>
    <property type="project" value="RGD"/>
</dbReference>
<dbReference type="GO" id="GO:0033017">
    <property type="term" value="C:sarcoplasmic reticulum membrane"/>
    <property type="evidence" value="ECO:0000266"/>
    <property type="project" value="RGD"/>
</dbReference>
<dbReference type="GO" id="GO:0030141">
    <property type="term" value="C:secretory granule"/>
    <property type="evidence" value="ECO:0000314"/>
    <property type="project" value="RGD"/>
</dbReference>
<dbReference type="GO" id="GO:0045202">
    <property type="term" value="C:synapse"/>
    <property type="evidence" value="ECO:0000266"/>
    <property type="project" value="RGD"/>
</dbReference>
<dbReference type="GO" id="GO:0030315">
    <property type="term" value="C:T-tubule"/>
    <property type="evidence" value="ECO:0000266"/>
    <property type="project" value="RGD"/>
</dbReference>
<dbReference type="GO" id="GO:0030018">
    <property type="term" value="C:Z disc"/>
    <property type="evidence" value="ECO:0000266"/>
    <property type="project" value="RGD"/>
</dbReference>
<dbReference type="GO" id="GO:0051117">
    <property type="term" value="F:ATPase binding"/>
    <property type="evidence" value="ECO:0000353"/>
    <property type="project" value="BHF-UCL"/>
</dbReference>
<dbReference type="GO" id="GO:0046870">
    <property type="term" value="F:cadmium ion binding"/>
    <property type="evidence" value="ECO:0000314"/>
    <property type="project" value="BHF-UCL"/>
</dbReference>
<dbReference type="GO" id="GO:0048306">
    <property type="term" value="F:calcium-dependent protein binding"/>
    <property type="evidence" value="ECO:0000353"/>
    <property type="project" value="ARUK-UCL"/>
</dbReference>
<dbReference type="GO" id="GO:0005516">
    <property type="term" value="F:calmodulin binding"/>
    <property type="evidence" value="ECO:0000314"/>
    <property type="project" value="RGD"/>
</dbReference>
<dbReference type="GO" id="GO:0019899">
    <property type="term" value="F:enzyme binding"/>
    <property type="evidence" value="ECO:0000353"/>
    <property type="project" value="RGD"/>
</dbReference>
<dbReference type="GO" id="GO:0050660">
    <property type="term" value="F:flavin adenine dinucleotide binding"/>
    <property type="evidence" value="ECO:0000314"/>
    <property type="project" value="BHF-UCL"/>
</dbReference>
<dbReference type="GO" id="GO:0010181">
    <property type="term" value="F:FMN binding"/>
    <property type="evidence" value="ECO:0000314"/>
    <property type="project" value="BHF-UCL"/>
</dbReference>
<dbReference type="GO" id="GO:0020037">
    <property type="term" value="F:heme binding"/>
    <property type="evidence" value="ECO:0000314"/>
    <property type="project" value="BHF-UCL"/>
</dbReference>
<dbReference type="GO" id="GO:0042802">
    <property type="term" value="F:identical protein binding"/>
    <property type="evidence" value="ECO:0000353"/>
    <property type="project" value="RGD"/>
</dbReference>
<dbReference type="GO" id="GO:0050661">
    <property type="term" value="F:NADP binding"/>
    <property type="evidence" value="ECO:0000314"/>
    <property type="project" value="BHF-UCL"/>
</dbReference>
<dbReference type="GO" id="GO:0070402">
    <property type="term" value="F:NADPH binding"/>
    <property type="evidence" value="ECO:0000314"/>
    <property type="project" value="RGD"/>
</dbReference>
<dbReference type="GO" id="GO:0004517">
    <property type="term" value="F:nitric-oxide synthase activity"/>
    <property type="evidence" value="ECO:0000314"/>
    <property type="project" value="UniProtKB"/>
</dbReference>
<dbReference type="GO" id="GO:0035605">
    <property type="term" value="F:peptidyl-cysteine S-nitrosylase activity"/>
    <property type="evidence" value="ECO:0000266"/>
    <property type="project" value="RGD"/>
</dbReference>
<dbReference type="GO" id="GO:0051219">
    <property type="term" value="F:phosphoprotein binding"/>
    <property type="evidence" value="ECO:0000353"/>
    <property type="project" value="CAFA"/>
</dbReference>
<dbReference type="GO" id="GO:0061629">
    <property type="term" value="F:RNA polymerase II-specific DNA-binding transcription factor binding"/>
    <property type="evidence" value="ECO:0000353"/>
    <property type="project" value="RGD"/>
</dbReference>
<dbReference type="GO" id="GO:0097110">
    <property type="term" value="F:scaffold protein binding"/>
    <property type="evidence" value="ECO:0000353"/>
    <property type="project" value="BHF-UCL"/>
</dbReference>
<dbReference type="GO" id="GO:0017080">
    <property type="term" value="F:sodium channel regulator activity"/>
    <property type="evidence" value="ECO:0000315"/>
    <property type="project" value="BHF-UCL"/>
</dbReference>
<dbReference type="GO" id="GO:0044325">
    <property type="term" value="F:transmembrane transporter binding"/>
    <property type="evidence" value="ECO:0000353"/>
    <property type="project" value="BHF-UCL"/>
</dbReference>
<dbReference type="GO" id="GO:0008270">
    <property type="term" value="F:zinc ion binding"/>
    <property type="evidence" value="ECO:0000314"/>
    <property type="project" value="RGD"/>
</dbReference>
<dbReference type="GO" id="GO:0006527">
    <property type="term" value="P:arginine catabolic process"/>
    <property type="evidence" value="ECO:0000314"/>
    <property type="project" value="BHF-UCL"/>
</dbReference>
<dbReference type="GO" id="GO:0048148">
    <property type="term" value="P:behavioral response to cocaine"/>
    <property type="evidence" value="ECO:0000315"/>
    <property type="project" value="RGD"/>
</dbReference>
<dbReference type="GO" id="GO:0006816">
    <property type="term" value="P:calcium ion transport"/>
    <property type="evidence" value="ECO:0000266"/>
    <property type="project" value="RGD"/>
</dbReference>
<dbReference type="GO" id="GO:0071872">
    <property type="term" value="P:cellular response to epinephrine stimulus"/>
    <property type="evidence" value="ECO:0000315"/>
    <property type="project" value="BHF-UCL"/>
</dbReference>
<dbReference type="GO" id="GO:0071363">
    <property type="term" value="P:cellular response to growth factor stimulus"/>
    <property type="evidence" value="ECO:0000266"/>
    <property type="project" value="RGD"/>
</dbReference>
<dbReference type="GO" id="GO:0071260">
    <property type="term" value="P:cellular response to mechanical stimulus"/>
    <property type="evidence" value="ECO:0000315"/>
    <property type="project" value="RGD"/>
</dbReference>
<dbReference type="GO" id="GO:0051649">
    <property type="term" value="P:establishment of localization in cell"/>
    <property type="evidence" value="ECO:0000266"/>
    <property type="project" value="RGD"/>
</dbReference>
<dbReference type="GO" id="GO:0045184">
    <property type="term" value="P:establishment of protein localization"/>
    <property type="evidence" value="ECO:0000314"/>
    <property type="project" value="CAFA"/>
</dbReference>
<dbReference type="GO" id="GO:0007565">
    <property type="term" value="P:female pregnancy"/>
    <property type="evidence" value="ECO:0000270"/>
    <property type="project" value="RGD"/>
</dbReference>
<dbReference type="GO" id="GO:0033555">
    <property type="term" value="P:multicellular organismal response to stress"/>
    <property type="evidence" value="ECO:0000266"/>
    <property type="project" value="RGD"/>
</dbReference>
<dbReference type="GO" id="GO:0043066">
    <property type="term" value="P:negative regulation of apoptotic process"/>
    <property type="evidence" value="ECO:0000315"/>
    <property type="project" value="RGD"/>
</dbReference>
<dbReference type="GO" id="GO:0045776">
    <property type="term" value="P:negative regulation of blood pressure"/>
    <property type="evidence" value="ECO:0000315"/>
    <property type="project" value="RGD"/>
</dbReference>
<dbReference type="GO" id="GO:0051926">
    <property type="term" value="P:negative regulation of calcium ion transport"/>
    <property type="evidence" value="ECO:0000266"/>
    <property type="project" value="RGD"/>
</dbReference>
<dbReference type="GO" id="GO:0008285">
    <property type="term" value="P:negative regulation of cell population proliferation"/>
    <property type="evidence" value="ECO:0000315"/>
    <property type="project" value="RGD"/>
</dbReference>
<dbReference type="GO" id="GO:0051481">
    <property type="term" value="P:negative regulation of cytosolic calcium ion concentration"/>
    <property type="evidence" value="ECO:0000315"/>
    <property type="project" value="RGD"/>
</dbReference>
<dbReference type="GO" id="GO:0061875">
    <property type="term" value="P:negative regulation of hepatic stellate cell contraction"/>
    <property type="evidence" value="ECO:0000314"/>
    <property type="project" value="RGD"/>
</dbReference>
<dbReference type="GO" id="GO:0046676">
    <property type="term" value="P:negative regulation of insulin secretion"/>
    <property type="evidence" value="ECO:0000315"/>
    <property type="project" value="RGD"/>
</dbReference>
<dbReference type="GO" id="GO:0034760">
    <property type="term" value="P:negative regulation of iron ion transmembrane transport"/>
    <property type="evidence" value="ECO:0000315"/>
    <property type="project" value="RGD"/>
</dbReference>
<dbReference type="GO" id="GO:0043524">
    <property type="term" value="P:negative regulation of neuron apoptotic process"/>
    <property type="evidence" value="ECO:0000315"/>
    <property type="project" value="RGD"/>
</dbReference>
<dbReference type="GO" id="GO:0043267">
    <property type="term" value="P:negative regulation of potassium ion transport"/>
    <property type="evidence" value="ECO:0000266"/>
    <property type="project" value="RGD"/>
</dbReference>
<dbReference type="GO" id="GO:0051612">
    <property type="term" value="P:negative regulation of serotonin uptake"/>
    <property type="evidence" value="ECO:0000266"/>
    <property type="project" value="RGD"/>
</dbReference>
<dbReference type="GO" id="GO:0045906">
    <property type="term" value="P:negative regulation of vasoconstriction"/>
    <property type="evidence" value="ECO:0000315"/>
    <property type="project" value="RGD"/>
</dbReference>
<dbReference type="GO" id="GO:0006809">
    <property type="term" value="P:nitric oxide biosynthetic process"/>
    <property type="evidence" value="ECO:0000314"/>
    <property type="project" value="BHF-UCL"/>
</dbReference>
<dbReference type="GO" id="GO:0007263">
    <property type="term" value="P:nitric oxide mediated signal transduction"/>
    <property type="evidence" value="ECO:0000318"/>
    <property type="project" value="GO_Central"/>
</dbReference>
<dbReference type="GO" id="GO:0046209">
    <property type="term" value="P:nitric oxide metabolic process"/>
    <property type="evidence" value="ECO:0000270"/>
    <property type="project" value="RGD"/>
</dbReference>
<dbReference type="GO" id="GO:0038060">
    <property type="term" value="P:nitric oxide-cGMP-mediated signaling"/>
    <property type="evidence" value="ECO:0000315"/>
    <property type="project" value="BHF-UCL"/>
</dbReference>
<dbReference type="GO" id="GO:0071879">
    <property type="term" value="P:positive regulation of adenylate cyclase-activating adrenergic receptor signaling pathway"/>
    <property type="evidence" value="ECO:0000315"/>
    <property type="project" value="BHF-UCL"/>
</dbReference>
<dbReference type="GO" id="GO:0106071">
    <property type="term" value="P:positive regulation of adenylate cyclase-activating G protein-coupled receptor signaling pathway"/>
    <property type="evidence" value="ECO:0000266"/>
    <property type="project" value="RGD"/>
</dbReference>
<dbReference type="GO" id="GO:0045893">
    <property type="term" value="P:positive regulation of DNA-templated transcription"/>
    <property type="evidence" value="ECO:0000266"/>
    <property type="project" value="RGD"/>
</dbReference>
<dbReference type="GO" id="GO:1900273">
    <property type="term" value="P:positive regulation of long-term synaptic potentiation"/>
    <property type="evidence" value="ECO:0000315"/>
    <property type="project" value="RGD"/>
</dbReference>
<dbReference type="GO" id="GO:0043525">
    <property type="term" value="P:positive regulation of neuron apoptotic process"/>
    <property type="evidence" value="ECO:0000266"/>
    <property type="project" value="RGD"/>
</dbReference>
<dbReference type="GO" id="GO:1902307">
    <property type="term" value="P:positive regulation of sodium ion transmembrane transport"/>
    <property type="evidence" value="ECO:0000315"/>
    <property type="project" value="BHF-UCL"/>
</dbReference>
<dbReference type="GO" id="GO:0098735">
    <property type="term" value="P:positive regulation of the force of heart contraction"/>
    <property type="evidence" value="ECO:0000266"/>
    <property type="project" value="RGD"/>
</dbReference>
<dbReference type="GO" id="GO:0045944">
    <property type="term" value="P:positive regulation of transcription by RNA polymerase II"/>
    <property type="evidence" value="ECO:0000266"/>
    <property type="project" value="RGD"/>
</dbReference>
<dbReference type="GO" id="GO:0006813">
    <property type="term" value="P:potassium ion transport"/>
    <property type="evidence" value="ECO:0000266"/>
    <property type="project" value="RGD"/>
</dbReference>
<dbReference type="GO" id="GO:0050767">
    <property type="term" value="P:regulation of neurogenesis"/>
    <property type="evidence" value="ECO:0000266"/>
    <property type="project" value="RGD"/>
</dbReference>
<dbReference type="GO" id="GO:0060078">
    <property type="term" value="P:regulation of postsynaptic membrane potential"/>
    <property type="evidence" value="ECO:0000266"/>
    <property type="project" value="RGD"/>
</dbReference>
<dbReference type="GO" id="GO:0002028">
    <property type="term" value="P:regulation of sodium ion transport"/>
    <property type="evidence" value="ECO:0000266"/>
    <property type="project" value="RGD"/>
</dbReference>
<dbReference type="GO" id="GO:0014823">
    <property type="term" value="P:response to activity"/>
    <property type="evidence" value="ECO:0000270"/>
    <property type="project" value="RGD"/>
</dbReference>
<dbReference type="GO" id="GO:0043627">
    <property type="term" value="P:response to estrogen"/>
    <property type="evidence" value="ECO:0000314"/>
    <property type="project" value="RGD"/>
</dbReference>
<dbReference type="GO" id="GO:0045471">
    <property type="term" value="P:response to ethanol"/>
    <property type="evidence" value="ECO:0000270"/>
    <property type="project" value="RGD"/>
</dbReference>
<dbReference type="GO" id="GO:0009408">
    <property type="term" value="P:response to heat"/>
    <property type="evidence" value="ECO:0000266"/>
    <property type="project" value="RGD"/>
</dbReference>
<dbReference type="GO" id="GO:0009725">
    <property type="term" value="P:response to hormone"/>
    <property type="evidence" value="ECO:0000318"/>
    <property type="project" value="GO_Central"/>
</dbReference>
<dbReference type="GO" id="GO:0001666">
    <property type="term" value="P:response to hypoxia"/>
    <property type="evidence" value="ECO:0000270"/>
    <property type="project" value="BHF-UCL"/>
</dbReference>
<dbReference type="GO" id="GO:0010288">
    <property type="term" value="P:response to lead ion"/>
    <property type="evidence" value="ECO:0000270"/>
    <property type="project" value="RGD"/>
</dbReference>
<dbReference type="GO" id="GO:0032496">
    <property type="term" value="P:response to lipopolysaccharide"/>
    <property type="evidence" value="ECO:0000270"/>
    <property type="project" value="RGD"/>
</dbReference>
<dbReference type="GO" id="GO:0035094">
    <property type="term" value="P:response to nicotine"/>
    <property type="evidence" value="ECO:0000270"/>
    <property type="project" value="RGD"/>
</dbReference>
<dbReference type="GO" id="GO:0071731">
    <property type="term" value="P:response to nitric oxide"/>
    <property type="evidence" value="ECO:0000270"/>
    <property type="project" value="RGD"/>
</dbReference>
<dbReference type="GO" id="GO:0031667">
    <property type="term" value="P:response to nutrient levels"/>
    <property type="evidence" value="ECO:0000270"/>
    <property type="project" value="RGD"/>
</dbReference>
<dbReference type="GO" id="GO:0043434">
    <property type="term" value="P:response to peptide hormone"/>
    <property type="evidence" value="ECO:0000315"/>
    <property type="project" value="RGD"/>
</dbReference>
<dbReference type="GO" id="GO:0033552">
    <property type="term" value="P:response to vitamin B3"/>
    <property type="evidence" value="ECO:0000270"/>
    <property type="project" value="RGD"/>
</dbReference>
<dbReference type="GO" id="GO:0033197">
    <property type="term" value="P:response to vitamin E"/>
    <property type="evidence" value="ECO:0000270"/>
    <property type="project" value="RGD"/>
</dbReference>
<dbReference type="GO" id="GO:0006941">
    <property type="term" value="P:striated muscle contraction"/>
    <property type="evidence" value="ECO:0000266"/>
    <property type="project" value="RGD"/>
</dbReference>
<dbReference type="GO" id="GO:0099163">
    <property type="term" value="P:synaptic signaling by nitric oxide"/>
    <property type="evidence" value="ECO:0000266"/>
    <property type="project" value="RGD"/>
</dbReference>
<dbReference type="GO" id="GO:0042311">
    <property type="term" value="P:vasodilation"/>
    <property type="evidence" value="ECO:0000315"/>
    <property type="project" value="RGD"/>
</dbReference>
<dbReference type="GO" id="GO:0042178">
    <property type="term" value="P:xenobiotic catabolic process"/>
    <property type="evidence" value="ECO:0000266"/>
    <property type="project" value="RGD"/>
</dbReference>
<dbReference type="CDD" id="cd06202">
    <property type="entry name" value="Nitric_oxide_synthase"/>
    <property type="match status" value="1"/>
</dbReference>
<dbReference type="CDD" id="cd00795">
    <property type="entry name" value="NOS_oxygenase_euk"/>
    <property type="match status" value="1"/>
</dbReference>
<dbReference type="CDD" id="cd06708">
    <property type="entry name" value="PDZ_nNOS-like"/>
    <property type="match status" value="1"/>
</dbReference>
<dbReference type="FunFam" id="3.90.440.10:FF:000001">
    <property type="entry name" value="Endothelial nitric oxide synthase"/>
    <property type="match status" value="1"/>
</dbReference>
<dbReference type="FunFam" id="1.20.990.10:FF:000002">
    <property type="entry name" value="Nitric oxide synthase"/>
    <property type="match status" value="1"/>
</dbReference>
<dbReference type="FunFam" id="2.30.42.10:FF:000069">
    <property type="entry name" value="Nitric oxide synthase"/>
    <property type="match status" value="1"/>
</dbReference>
<dbReference type="FunFam" id="3.40.50.360:FF:000003">
    <property type="entry name" value="Nitric oxide synthase"/>
    <property type="match status" value="1"/>
</dbReference>
<dbReference type="FunFam" id="3.40.50.80:FF:000003">
    <property type="entry name" value="Nitric oxide synthase"/>
    <property type="match status" value="1"/>
</dbReference>
<dbReference type="FunFam" id="3.90.1230.10:FF:000001">
    <property type="entry name" value="Nitric oxide synthase, brain"/>
    <property type="match status" value="1"/>
</dbReference>
<dbReference type="Gene3D" id="2.30.42.10">
    <property type="match status" value="1"/>
</dbReference>
<dbReference type="Gene3D" id="3.40.50.360">
    <property type="match status" value="1"/>
</dbReference>
<dbReference type="Gene3D" id="1.20.990.10">
    <property type="entry name" value="NADPH-cytochrome p450 Reductase, Chain A, domain 3"/>
    <property type="match status" value="1"/>
</dbReference>
<dbReference type="Gene3D" id="3.90.340.10">
    <property type="entry name" value="Nitric Oxide Synthase, Chain A, domain 1"/>
    <property type="match status" value="1"/>
</dbReference>
<dbReference type="Gene3D" id="3.90.1230.10">
    <property type="entry name" value="Nitric Oxide Synthase, Chain A, domain 3"/>
    <property type="match status" value="1"/>
</dbReference>
<dbReference type="Gene3D" id="3.90.440.10">
    <property type="entry name" value="Nitric Oxide Synthase,Heme Domain,Chain A domain 2"/>
    <property type="match status" value="1"/>
</dbReference>
<dbReference type="Gene3D" id="3.40.50.80">
    <property type="entry name" value="Nucleotide-binding domain of ferredoxin-NADP reductase (FNR) module"/>
    <property type="match status" value="1"/>
</dbReference>
<dbReference type="Gene3D" id="2.40.30.10">
    <property type="entry name" value="Translation factors"/>
    <property type="match status" value="1"/>
</dbReference>
<dbReference type="InterPro" id="IPR003097">
    <property type="entry name" value="CysJ-like_FAD-binding"/>
</dbReference>
<dbReference type="InterPro" id="IPR017927">
    <property type="entry name" value="FAD-bd_FR_type"/>
</dbReference>
<dbReference type="InterPro" id="IPR001094">
    <property type="entry name" value="Flavdoxin-like"/>
</dbReference>
<dbReference type="InterPro" id="IPR008254">
    <property type="entry name" value="Flavodoxin/NO_synth"/>
</dbReference>
<dbReference type="InterPro" id="IPR001709">
    <property type="entry name" value="Flavoprot_Pyr_Nucl_cyt_Rdtase"/>
</dbReference>
<dbReference type="InterPro" id="IPR029039">
    <property type="entry name" value="Flavoprotein-like_sf"/>
</dbReference>
<dbReference type="InterPro" id="IPR039261">
    <property type="entry name" value="FNR_nucleotide-bd"/>
</dbReference>
<dbReference type="InterPro" id="IPR023173">
    <property type="entry name" value="NADPH_Cyt_P450_Rdtase_alpha"/>
</dbReference>
<dbReference type="InterPro" id="IPR050607">
    <property type="entry name" value="NOS"/>
</dbReference>
<dbReference type="InterPro" id="IPR044943">
    <property type="entry name" value="NOS_dom_1"/>
</dbReference>
<dbReference type="InterPro" id="IPR044940">
    <property type="entry name" value="NOS_dom_2"/>
</dbReference>
<dbReference type="InterPro" id="IPR044944">
    <property type="entry name" value="NOS_dom_3"/>
</dbReference>
<dbReference type="InterPro" id="IPR012144">
    <property type="entry name" value="NOS_euk"/>
</dbReference>
<dbReference type="InterPro" id="IPR004030">
    <property type="entry name" value="NOS_N"/>
</dbReference>
<dbReference type="InterPro" id="IPR036119">
    <property type="entry name" value="NOS_N_sf"/>
</dbReference>
<dbReference type="InterPro" id="IPR001433">
    <property type="entry name" value="OxRdtase_FAD/NAD-bd"/>
</dbReference>
<dbReference type="InterPro" id="IPR001478">
    <property type="entry name" value="PDZ"/>
</dbReference>
<dbReference type="InterPro" id="IPR036034">
    <property type="entry name" value="PDZ_sf"/>
</dbReference>
<dbReference type="InterPro" id="IPR017938">
    <property type="entry name" value="Riboflavin_synthase-like_b-brl"/>
</dbReference>
<dbReference type="PANTHER" id="PTHR43410:SF2">
    <property type="entry name" value="NITRIC OXIDE SYNTHASE"/>
    <property type="match status" value="1"/>
</dbReference>
<dbReference type="PANTHER" id="PTHR43410">
    <property type="entry name" value="NITRIC OXIDE SYNTHASE OXYGENASE"/>
    <property type="match status" value="1"/>
</dbReference>
<dbReference type="Pfam" id="PF00667">
    <property type="entry name" value="FAD_binding_1"/>
    <property type="match status" value="1"/>
</dbReference>
<dbReference type="Pfam" id="PF00258">
    <property type="entry name" value="Flavodoxin_1"/>
    <property type="match status" value="1"/>
</dbReference>
<dbReference type="Pfam" id="PF00175">
    <property type="entry name" value="NAD_binding_1"/>
    <property type="match status" value="1"/>
</dbReference>
<dbReference type="Pfam" id="PF02898">
    <property type="entry name" value="NO_synthase"/>
    <property type="match status" value="1"/>
</dbReference>
<dbReference type="Pfam" id="PF00595">
    <property type="entry name" value="PDZ"/>
    <property type="match status" value="1"/>
</dbReference>
<dbReference type="PIRSF" id="PIRSF000333">
    <property type="entry name" value="NOS"/>
    <property type="match status" value="1"/>
</dbReference>
<dbReference type="PRINTS" id="PR00369">
    <property type="entry name" value="FLAVODOXIN"/>
</dbReference>
<dbReference type="PRINTS" id="PR00371">
    <property type="entry name" value="FPNCR"/>
</dbReference>
<dbReference type="SMART" id="SM00228">
    <property type="entry name" value="PDZ"/>
    <property type="match status" value="1"/>
</dbReference>
<dbReference type="SUPFAM" id="SSF52343">
    <property type="entry name" value="Ferredoxin reductase-like, C-terminal NADP-linked domain"/>
    <property type="match status" value="1"/>
</dbReference>
<dbReference type="SUPFAM" id="SSF52218">
    <property type="entry name" value="Flavoproteins"/>
    <property type="match status" value="1"/>
</dbReference>
<dbReference type="SUPFAM" id="SSF56512">
    <property type="entry name" value="Nitric oxide (NO) synthase oxygenase domain"/>
    <property type="match status" value="1"/>
</dbReference>
<dbReference type="SUPFAM" id="SSF50156">
    <property type="entry name" value="PDZ domain-like"/>
    <property type="match status" value="1"/>
</dbReference>
<dbReference type="SUPFAM" id="SSF63380">
    <property type="entry name" value="Riboflavin synthase domain-like"/>
    <property type="match status" value="1"/>
</dbReference>
<dbReference type="PROSITE" id="PS51384">
    <property type="entry name" value="FAD_FR"/>
    <property type="match status" value="1"/>
</dbReference>
<dbReference type="PROSITE" id="PS50902">
    <property type="entry name" value="FLAVODOXIN_LIKE"/>
    <property type="match status" value="1"/>
</dbReference>
<dbReference type="PROSITE" id="PS60001">
    <property type="entry name" value="NOS"/>
    <property type="match status" value="1"/>
</dbReference>
<dbReference type="PROSITE" id="PS50106">
    <property type="entry name" value="PDZ"/>
    <property type="match status" value="1"/>
</dbReference>
<reference key="1">
    <citation type="journal article" date="1991" name="Nature">
        <title>Cloned and expressed nitric oxide synthase structurally resembles cytochrome P-450 reductase.</title>
        <authorList>
            <person name="Bredt D.S."/>
            <person name="Hwang P.M."/>
            <person name="Glatt C.L."/>
            <person name="Lowenstein C."/>
            <person name="Reed R.R."/>
            <person name="Snyder S.H."/>
        </authorList>
    </citation>
    <scope>NUCLEOTIDE SEQUENCE [MRNA]</scope>
    <scope>PARTIAL PROTEIN SEQUENCE</scope>
    <scope>FUNCTION</scope>
    <scope>CATALYTIC ACTIVITY</scope>
    <scope>ACTIVITY REGULATION</scope>
    <scope>REGION</scope>
    <source>
        <tissue>Brain</tissue>
    </source>
</reference>
<reference key="2">
    <citation type="journal article" date="1996" name="Biochem. Biophys. Res. Commun.">
        <title>Cloning of a novel neuronal nitric oxide synthase expressed in penis and lower urinary tract.</title>
        <authorList>
            <person name="Magee T."/>
            <person name="Fuentes A.M."/>
            <person name="Garban H."/>
            <person name="Rajavashisth T."/>
            <person name="Marquez D."/>
            <person name="Rodriguez J.A."/>
            <person name="Rajfer J."/>
            <person name="Gonzalez-Cadavid N.F."/>
        </authorList>
    </citation>
    <scope>NUCLEOTIDE SEQUENCE [MRNA] (ISOFORM PNNOS)</scope>
    <source>
        <strain>Fischer 344</strain>
        <tissue>Penis</tissue>
    </source>
</reference>
<reference key="3">
    <citation type="journal article" date="1994" name="J. Biochem.">
        <title>Nitric oxide synthase from rat colorectum: purification, peptide sequencing, partial PCR cloning, and immunohistochemistry.</title>
        <authorList>
            <person name="Seo H.G."/>
            <person name="Tatsumi H."/>
            <person name="Fujii J."/>
            <person name="Nishikawa A."/>
            <person name="Suzuki K."/>
            <person name="Kangawa K."/>
            <person name="Taniguchi N."/>
        </authorList>
    </citation>
    <scope>PROTEIN SEQUENCE OF 119-129; 132-142; 144-156; 189-200; 264-276; 305-310; 360-369; 376-379; 381-385; 387-396; 779-785; 953-963 AND 1131-1139</scope>
    <scope>TISSUE SPECIFICITY</scope>
    <source>
        <tissue>Colon</tissue>
    </source>
</reference>
<reference key="4">
    <citation type="journal article" date="1995" name="Biochem. Biophys. Res. Commun.">
        <title>The identification of the pterin-binding domain in the nitric oxide synthase's sequence.</title>
        <authorList>
            <person name="Uvarov V.Y."/>
            <person name="Lyashenko A.A."/>
        </authorList>
    </citation>
    <scope>IDENTIFICATION OF TETRAHYDROBIOPTERIN-BINDING DOMAIN</scope>
</reference>
<reference key="5">
    <citation type="journal article" date="1996" name="Science">
        <title>PIN: an associated protein inhibitor of neuronal nitric oxide synthase.</title>
        <authorList>
            <person name="Jaffrey S.R."/>
            <person name="Snyder S.H."/>
        </authorList>
    </citation>
    <scope>SUBUNIT</scope>
    <scope>INTERACTION WITH DYNLL1</scope>
    <scope>REGION</scope>
</reference>
<reference key="6">
    <citation type="journal article" date="2001" name="Biochem. Biophys. Res. Commun.">
        <title>Unusual role of Tyr588 of neuronal nitric oxide synthase in controlling substrate specificity and electron transfer.</title>
        <authorList>
            <person name="Sato Y."/>
            <person name="Sagami I."/>
            <person name="Matsui T."/>
            <person name="Shimizu T."/>
        </authorList>
    </citation>
    <scope>MUTAGENESIS OF TYR-588</scope>
</reference>
<reference key="7">
    <citation type="journal article" date="2000" name="Neuron">
        <title>Dexras1: a G protein specifically coupled to neuronal nitric oxide synthase via CAPON.</title>
        <authorList>
            <person name="Fang M."/>
            <person name="Jaffrey S.R."/>
            <person name="Sawa A."/>
            <person name="Ye K."/>
            <person name="Luo X."/>
            <person name="Snyder S.H."/>
        </authorList>
    </citation>
    <scope>INTERACTION WITH CAPON AND RASD1</scope>
</reference>
<reference key="8">
    <citation type="journal article" date="2002" name="Proc. Natl. Acad. Sci. U.S.A.">
        <title>Neuronal nitric-oxide synthase localization mediated by a ternary complex with synapsin and CAPON.</title>
        <authorList>
            <person name="Jaffrey S.R."/>
            <person name="Benfenati F."/>
            <person name="Snowman A.M."/>
            <person name="Czernik A.J."/>
            <person name="Snyder S.H."/>
        </authorList>
    </citation>
    <scope>INTERACTION WITH CAPON AND SYN1</scope>
</reference>
<reference key="9">
    <citation type="journal article" date="2004" name="J. Biol. Chem.">
        <title>NIDD, a novel DHHC-containing protein, targets neuronal nitric-oxide synthase (nNOS) to the synaptic membrane through a PDZ-dependent interaction and regulates nNOS activity.</title>
        <authorList>
            <person name="Saitoh F."/>
            <person name="Tian Q.B."/>
            <person name="Okano A."/>
            <person name="Sakagami H."/>
            <person name="Kondo H."/>
            <person name="Suzuki T."/>
        </authorList>
    </citation>
    <scope>INTERACTION WITH ZDHHC23</scope>
    <scope>DOMAIN</scope>
</reference>
<reference key="10">
    <citation type="journal article" date="2004" name="J. Biol. Chem.">
        <title>Ubiquitylation of neuronal nitric-oxide synthase by CHIP, a chaperone-dependent E3 ligase.</title>
        <authorList>
            <person name="Peng H.M."/>
            <person name="Morishima Y."/>
            <person name="Jenkins G.J."/>
            <person name="Dunbar A.Y."/>
            <person name="Lau M."/>
            <person name="Patterson C."/>
            <person name="Pratt W.B."/>
            <person name="Osawa Y."/>
        </authorList>
    </citation>
    <scope>UBIQUITINATION</scope>
</reference>
<reference key="11">
    <citation type="journal article" date="2004" name="J. Neurosci.">
        <title>Nitric oxide synthase (NOS)-interacting protein interacts with neuronal NOS and regulates its distribution and activity.</title>
        <authorList>
            <person name="Dreyer J."/>
            <person name="Schleicher M."/>
            <person name="Tappe A."/>
            <person name="Schilling K."/>
            <person name="Kuner T."/>
            <person name="Kusumawidijaja G."/>
            <person name="Mueller-Esterl W."/>
            <person name="Oess S."/>
            <person name="Kuner R."/>
        </authorList>
    </citation>
    <scope>FUNCTION</scope>
    <scope>INTERACTION WITH NOSIP</scope>
    <scope>CATALYTIC ACTIVITY</scope>
    <scope>ACTIVITY REGULATION</scope>
    <scope>SUBCELLULAR LOCATION</scope>
    <scope>REGION</scope>
</reference>
<reference key="12">
    <citation type="journal article" date="2006" name="FEBS Lett.">
        <title>Binding of Vac14 to neuronal nitric oxide synthase: Characterisation of a new internal PDZ-recognition motif.</title>
        <authorList>
            <person name="Lemaire J.F."/>
            <person name="McPherson P.S."/>
        </authorList>
    </citation>
    <scope>INTERACTION WITH VAC14</scope>
    <scope>DOMAIN</scope>
</reference>
<reference key="13">
    <citation type="journal article" date="2012" name="Nat. Commun.">
        <title>Quantitative maps of protein phosphorylation sites across 14 different rat organs and tissues.</title>
        <authorList>
            <person name="Lundby A."/>
            <person name="Secher A."/>
            <person name="Lage K."/>
            <person name="Nordsborg N.B."/>
            <person name="Dmytriyev A."/>
            <person name="Lundby C."/>
            <person name="Olsen J.V."/>
        </authorList>
    </citation>
    <scope>PHOSPHORYLATION [LARGE SCALE ANALYSIS] AT SER-847 AND SER-858</scope>
    <scope>IDENTIFICATION BY MASS SPECTROMETRY [LARGE SCALE ANALYSIS]</scope>
</reference>
<reference key="14">
    <citation type="journal article" date="2013" name="J. Biol. Chem.">
        <title>Post-synaptic density-95 (PSD-95) binding capacity of G-protein-coupled receptor 30 (GPR30), an estrogen receptor that can be identified in hippocampal dendritic spines.</title>
        <authorList>
            <person name="Akama K.T."/>
            <person name="Thompson L.I."/>
            <person name="Milner T.A."/>
            <person name="McEwen B.S."/>
        </authorList>
    </citation>
    <scope>INTERACTION WITH DLG4</scope>
    <scope>DOMAIN</scope>
</reference>
<reference key="15">
    <citation type="journal article" date="2022" name="Bioorg. Med. Chem.">
        <title>2-Aminopyridines with a shortened amino sidechain as potent, selective, and highly permeable human neuronal nitric oxide synthase inhibitors.</title>
        <authorList>
            <person name="Vasu D."/>
            <person name="Li H."/>
            <person name="Hardy C.D."/>
            <person name="Poulos T.L."/>
            <person name="Silverman R.B."/>
        </authorList>
    </citation>
    <scope>FUNCTION</scope>
    <scope>CATALYTIC ACTIVITY</scope>
</reference>
<reference evidence="27 28" key="16">
    <citation type="journal article" date="1999" name="Science">
        <title>Unexpected modes of PDZ domain scaffolding revealed by structure of nNOS-syntrophin complex.</title>
        <authorList>
            <person name="Hillier B.J."/>
            <person name="Christopherson K.S."/>
            <person name="Prehoda K.E."/>
            <person name="Bredt D.S."/>
            <person name="Lim W.A."/>
        </authorList>
    </citation>
    <scope>X-RAY CRYSTALLOGRAPHY (1.25 ANGSTROMS) OF 14-125</scope>
</reference>
<reference evidence="26" key="17">
    <citation type="journal article" date="2001" name="J. Biol. Chem.">
        <title>Crystal structure of the FAD/NADPH-binding domain of rat neuronal nitric-oxide synthase. Comparisons with nadph-cytochrome p450 oxidoreductase.</title>
        <authorList>
            <person name="Zhang J."/>
            <person name="Martasek P."/>
            <person name="Paschke R."/>
            <person name="Shea T."/>
            <person name="Masters B.S.S."/>
            <person name="Kim J.-J.P."/>
        </authorList>
    </citation>
    <scope>X-RAY CRYSTALLOGRAPHY (1.9 ANGSTROMS) OF 963-1397 IN COMPLEX WITH NADPH AND FAD</scope>
</reference>
<reference evidence="29" key="18">
    <citation type="journal article" date="2004" name="J. Biol. Chem.">
        <title>Structural basis for isozyme-specific regulation of electron transfer in nitric-oxide synthase.</title>
        <authorList>
            <person name="Garcin E.D."/>
            <person name="Bruns C.M."/>
            <person name="Lloyd S.J."/>
            <person name="Hosfield D.J."/>
            <person name="Tiso M."/>
            <person name="Gachhui R."/>
            <person name="Stuehr D.J."/>
            <person name="Tainer J.A."/>
            <person name="Getzoff E.D."/>
        </authorList>
    </citation>
    <scope>X-RAY CRYSTALLOGRAPHY (2.30 ANGSTROMS) OF 742-1429 IN COMPLEX WITH FAD; FMN AND NADP(+)</scope>
</reference>
<accession>P29476</accession>
<accession>P70594</accession>
<evidence type="ECO:0000250" key="1">
    <source>
        <dbReference type="UniProtKB" id="P29475"/>
    </source>
</evidence>
<evidence type="ECO:0000250" key="2">
    <source>
        <dbReference type="UniProtKB" id="Q9Z0J4"/>
    </source>
</evidence>
<evidence type="ECO:0000255" key="3"/>
<evidence type="ECO:0000255" key="4">
    <source>
        <dbReference type="PROSITE-ProRule" id="PRU00088"/>
    </source>
</evidence>
<evidence type="ECO:0000255" key="5">
    <source>
        <dbReference type="PROSITE-ProRule" id="PRU00143"/>
    </source>
</evidence>
<evidence type="ECO:0000255" key="6">
    <source>
        <dbReference type="PROSITE-ProRule" id="PRU00716"/>
    </source>
</evidence>
<evidence type="ECO:0000256" key="7">
    <source>
        <dbReference type="SAM" id="MobiDB-lite"/>
    </source>
</evidence>
<evidence type="ECO:0000269" key="8">
    <source>
    </source>
</evidence>
<evidence type="ECO:0000269" key="9">
    <source>
    </source>
</evidence>
<evidence type="ECO:0000269" key="10">
    <source>
    </source>
</evidence>
<evidence type="ECO:0000269" key="11">
    <source>
    </source>
</evidence>
<evidence type="ECO:0000269" key="12">
    <source>
    </source>
</evidence>
<evidence type="ECO:0000269" key="13">
    <source>
    </source>
</evidence>
<evidence type="ECO:0000269" key="14">
    <source>
    </source>
</evidence>
<evidence type="ECO:0000269" key="15">
    <source>
    </source>
</evidence>
<evidence type="ECO:0000269" key="16">
    <source>
    </source>
</evidence>
<evidence type="ECO:0000269" key="17">
    <source>
    </source>
</evidence>
<evidence type="ECO:0000269" key="18">
    <source>
    </source>
</evidence>
<evidence type="ECO:0000269" key="19">
    <source>
    </source>
</evidence>
<evidence type="ECO:0000269" key="20">
    <source>
    </source>
</evidence>
<evidence type="ECO:0000269" key="21">
    <source>
    </source>
</evidence>
<evidence type="ECO:0000303" key="22">
    <source>
    </source>
</evidence>
<evidence type="ECO:0000305" key="23"/>
<evidence type="ECO:0000305" key="24">
    <source>
    </source>
</evidence>
<evidence type="ECO:0000312" key="25">
    <source>
        <dbReference type="RGD" id="3184"/>
    </source>
</evidence>
<evidence type="ECO:0007744" key="26">
    <source>
        <dbReference type="PDB" id="1F20"/>
    </source>
</evidence>
<evidence type="ECO:0007744" key="27">
    <source>
        <dbReference type="PDB" id="1QAU"/>
    </source>
</evidence>
<evidence type="ECO:0007744" key="28">
    <source>
        <dbReference type="PDB" id="1QAV"/>
    </source>
</evidence>
<evidence type="ECO:0007744" key="29">
    <source>
        <dbReference type="PDB" id="1TLL"/>
    </source>
</evidence>
<evidence type="ECO:0007744" key="30">
    <source>
    </source>
</evidence>
<evidence type="ECO:0007829" key="31">
    <source>
        <dbReference type="PDB" id="1B8Q"/>
    </source>
</evidence>
<evidence type="ECO:0007829" key="32">
    <source>
        <dbReference type="PDB" id="1CMI"/>
    </source>
</evidence>
<evidence type="ECO:0007829" key="33">
    <source>
        <dbReference type="PDB" id="1F20"/>
    </source>
</evidence>
<evidence type="ECO:0007829" key="34">
    <source>
        <dbReference type="PDB" id="1K2U"/>
    </source>
</evidence>
<evidence type="ECO:0007829" key="35">
    <source>
        <dbReference type="PDB" id="1QAU"/>
    </source>
</evidence>
<evidence type="ECO:0007829" key="36">
    <source>
        <dbReference type="PDB" id="1QAV"/>
    </source>
</evidence>
<evidence type="ECO:0007829" key="37">
    <source>
        <dbReference type="PDB" id="1TLL"/>
    </source>
</evidence>
<evidence type="ECO:0007829" key="38">
    <source>
        <dbReference type="PDB" id="1VAG"/>
    </source>
</evidence>
<evidence type="ECO:0007829" key="39">
    <source>
        <dbReference type="PDB" id="3N5V"/>
    </source>
</evidence>
<evidence type="ECO:0007829" key="40">
    <source>
        <dbReference type="PDB" id="3N6D"/>
    </source>
</evidence>
<evidence type="ECO:0007829" key="41">
    <source>
        <dbReference type="PDB" id="4HOP"/>
    </source>
</evidence>
<evidence type="ECO:0007829" key="42">
    <source>
        <dbReference type="PDB" id="6NGM"/>
    </source>
</evidence>
<evidence type="ECO:0007829" key="43">
    <source>
        <dbReference type="PDB" id="7TSD"/>
    </source>
</evidence>
<evidence type="ECO:0007829" key="44">
    <source>
        <dbReference type="PDB" id="7UAN"/>
    </source>
</evidence>
<sequence length="1429" mass="160559">MEENTFGVQQIQPNVISVRLFKRKVGGLGFLVKERVSKPPVIISDLIRGGAAEQSGLIQAGDIILAVNDRPLVDLSYDSALEVLRGIASETHVVLILRGPEGFTTHLETTFTGDGTPKTIRVTQPLGPPTKAVDLSHQPSASKDQSLAVDRVTGLGNGPQHAQGHGQGAGSVSQANGVAIDPTMKSTKANLQDIGEHDELLKEIEPVLSILNSGSKATNRGGPAKAEMKDTGIQVDRDLDGKSHKAPPLGGDNDRVFNDLWGKDNVPVILNNPYSEKEQSPTSGKQSPTKNGSPSRCPRFLKVKNWETDVVLTDTLHLKSTLETGCTEHICMGSIMLPSQHTRKPEDVRTKDQLFPLAKEFLDQYYSSIKRFGSKAHMDRLEEVNKEIESTSTYQLKDTELIYGAKHAWRNASRCVGRIQWSKLQVFDARDCTTAHGMFNYICNHVKYATNKGNLRSAITIFPQRTDGKHDFRVWNSQLIRYAGYKQPDGSTLGDPANVQFTEICIQQGWKAPRGRFDVLPLLLQANGNDPELFQIPPELVLEVPIRHPKFDWFKDLGLKWYGLPAVSNMLLEIGGLEFSACPFSGWYMGTEIGVRDYCDNSRYNILEEVAKKMDLDMRKTSSLWKDQALVEINIAVLYSFQSDKVTIVDHHSATESFIKHMENEYRCRGGCPADWVWIVPPMSGSITPVFHQEMLNYRLTPSFEYQPDPWNTHVWKGTNGTPTKRRAIGFKKLAEAVKFSAKLMGQAMAKRVKATILYATETGKSQAYAKTLCEIFKHAFDAKAMSMEEYDIVHLEHEALVLVVTSTFGNGDPPENGEKFGCALMEMRHPNSVQEERKSYKVRFNSVSSYSDSRKSSGDGPDLRDNFESTGPLANVRFSVFGLGSRAYPHFCAFGHAVDTLLEELGGERILKMREGDELCGQEEAFRTWAKKVFKAACDVFCVGDDVNIEKPNNSLISNDRSWKRNKFRLTYVAEAPDLTQGLSNVHKKRVSAARLLSRQNLQSPKFSRSTIFVRLHTNGNQELQYQPGDHLGVFPGNHEDLVNALIERLEDAPPANHVVKVEMLEERNTALGVISNWKDESRLPPCTIFQAFKYYLDITTPPTPLQLQQFASLATNEKEKQRLLVLSKGLQEYEEWKWGKNPTMVEVLEEFPSIQMPATLLLTQLSLLQPRYYSISSSPDMYPDEVHLTVAIVSYHTRDGEGPVHHGVCSSWLNRIQADDVVPCFVRGAPSFHLPRNPQVPCILVGPGTGIAPFRSFWQQRQFDIQHKGMNPCPMVLVFGCRQSKIDHIYREETLQAKNKGVFRELYTAYSREPDRPKKYVQDVLQEQLAESVYRALKEQGGHIYVCGDVTMAADVLKAIQRIMTQQGKLSEEDAGVFISRLRDDNRYHEDIFGVTLRTYEVTNRLRSESIAFIEESKKDADEVFSS</sequence>
<proteinExistence type="evidence at protein level"/>
<name>NOS1_RAT</name>
<organism>
    <name type="scientific">Rattus norvegicus</name>
    <name type="common">Rat</name>
    <dbReference type="NCBI Taxonomy" id="10116"/>
    <lineage>
        <taxon>Eukaryota</taxon>
        <taxon>Metazoa</taxon>
        <taxon>Chordata</taxon>
        <taxon>Craniata</taxon>
        <taxon>Vertebrata</taxon>
        <taxon>Euteleostomi</taxon>
        <taxon>Mammalia</taxon>
        <taxon>Eutheria</taxon>
        <taxon>Euarchontoglires</taxon>
        <taxon>Glires</taxon>
        <taxon>Rodentia</taxon>
        <taxon>Myomorpha</taxon>
        <taxon>Muroidea</taxon>
        <taxon>Muridae</taxon>
        <taxon>Murinae</taxon>
        <taxon>Rattus</taxon>
    </lineage>
</organism>
<comment type="function">
    <text evidence="15 16 19">Produces nitric oxide (NO) which is a messenger molecule with diverse functions throughout the body. In the brain and peripheral nervous system, NO displays many properties of a neurotransmitter. Inhibitory transmitter for non-adrenergic and non-cholinergic nerves in the colorectum. Probably has nitrosylase activity and mediates cysteine S-nitrosylation of cytoplasmic target proteins such SRR. Inhibitory transmitter for non-adrenergic and non-cholinergic nerves in the colorectum.</text>
</comment>
<comment type="catalytic activity">
    <reaction evidence="15 16">
        <text>2 L-arginine + 3 NADPH + 4 O2 + H(+) = 2 L-citrulline + 2 nitric oxide + 3 NADP(+) + 4 H2O</text>
        <dbReference type="Rhea" id="RHEA:19897"/>
        <dbReference type="ChEBI" id="CHEBI:15377"/>
        <dbReference type="ChEBI" id="CHEBI:15378"/>
        <dbReference type="ChEBI" id="CHEBI:15379"/>
        <dbReference type="ChEBI" id="CHEBI:16480"/>
        <dbReference type="ChEBI" id="CHEBI:32682"/>
        <dbReference type="ChEBI" id="CHEBI:57743"/>
        <dbReference type="ChEBI" id="CHEBI:57783"/>
        <dbReference type="ChEBI" id="CHEBI:58349"/>
        <dbReference type="EC" id="1.14.13.39"/>
    </reaction>
    <physiologicalReaction direction="left-to-right" evidence="24">
        <dbReference type="Rhea" id="RHEA:19898"/>
    </physiologicalReaction>
</comment>
<comment type="cofactor">
    <cofactor evidence="1">
        <name>heme b</name>
        <dbReference type="ChEBI" id="CHEBI:60344"/>
    </cofactor>
</comment>
<comment type="cofactor">
    <cofactor evidence="10 13">
        <name>FAD</name>
        <dbReference type="ChEBI" id="CHEBI:57692"/>
    </cofactor>
    <text evidence="10 13">Binds 1 FAD.</text>
</comment>
<comment type="cofactor">
    <cofactor evidence="13">
        <name>FMN</name>
        <dbReference type="ChEBI" id="CHEBI:58210"/>
    </cofactor>
    <text evidence="13">Binds 1 FMN.</text>
</comment>
<comment type="cofactor">
    <cofactor evidence="1">
        <name>(6R)-L-erythro-5,6,7,8-tetrahydrobiopterin</name>
        <dbReference type="ChEBI" id="CHEBI:59560"/>
    </cofactor>
    <text evidence="1">Tetrahydrobiopterin (BH4). May stabilize the dimeric form of the enzyme.</text>
</comment>
<comment type="activity regulation">
    <text evidence="15 16 21">Stimulated by calcium/calmodulin (PubMed:1712077). Inhibited by DYNLL1 that prevents the dimerization of the protein (PubMed:15548660, PubMed:8864115). Inhibited by NOSIP (PubMed:15548660).</text>
</comment>
<comment type="subunit">
    <text evidence="2 8 11 12 15 17 18 21">Homodimer (PubMed:8864115). Interacts with DLG4 (via N-terminal tandem pair of PDZ domains); the interaction possibly being prevented by the association between NOS1 and CAPON (PubMed:23300088). Forms a ternary complex with CAPON and RASD1 (PubMed:11086993). Forms a ternary complex with CAPON and SYN1 (PubMed:11867766). Interacts with ZDHHC23 (PubMed:15105416). Interacts with NOSIP; which may impair its synaptic location (PubMed:15548660). Interacts with HTR4 (By similarity). Interacts with SLC6A4. Interacts with VAC14 (PubMed:17161399). Forms a complex with ASL, ASS1 and SLC7A1; the complex regulates cell-autonomous L-arginine synthesis and citrulline recycling while channeling extracellular L-arginine to nitric oxide synthesis pathway (By similarity). Interacts with DMD; localizes NOS1 to sarcolemma in muscle cells (By similarity). Interacts with DYNLL1; inhibits the nitric oxide synthase activity (PubMed:8864115).</text>
</comment>
<comment type="interaction">
    <interactant intactId="EBI-349460">
        <id>P29476</id>
    </interactant>
    <interactant intactId="EBI-15573788">
        <id>O08701</id>
        <label>Arg2</label>
    </interactant>
    <organismsDiffer>false</organismsDiffer>
    <experiments>2</experiments>
</comment>
<comment type="interaction">
    <interactant intactId="EBI-349460">
        <id>P29476</id>
    </interactant>
    <interactant intactId="EBI-397403">
        <id>P62157</id>
        <label>CALM</label>
    </interactant>
    <organismsDiffer>true</organismsDiffer>
    <experiments>2</experiments>
</comment>
<comment type="subcellular location">
    <subcellularLocation>
        <location evidence="2">Cell membrane</location>
        <location evidence="2">Sarcolemma</location>
        <topology evidence="3">Peripheral membrane protein</topology>
    </subcellularLocation>
    <subcellularLocation>
        <location evidence="15">Cell projection</location>
        <location evidence="15">Dendritic spine</location>
    </subcellularLocation>
    <text evidence="2 15">In skeletal muscle, it is localized beneath the sarcolemma of fast-twitch muscle fiber by associating with the dystrophin glycoprotein complex (By similarity). In neurons, enriched in dendritic spines (PubMed:15548660).</text>
</comment>
<comment type="alternative products">
    <event type="alternative splicing"/>
    <isoform>
        <id>P29476-1</id>
        <name>N-NOS-1</name>
        <sequence type="displayed"/>
    </isoform>
    <isoform>
        <id>P29476-2</id>
        <name>N-NOS-2</name>
        <sequence type="described" ref="VSP_003580"/>
    </isoform>
    <isoform>
        <id>P29476-3</id>
        <name>PNNOS</name>
        <sequence type="described" ref="VSP_003581"/>
    </isoform>
</comment>
<comment type="tissue specificity">
    <text evidence="20">Isoform N-NOS-1 is expressed in brain and colorectum. Found in the Auerbach's plexus of the enteric nervous system. Isoform PNNOS is expressed in the penis, urethra, prostate, and skeletal muscle, and coexists with the cerebellar nnos in the pelvic plexus, bladder and liver, and is detectable in the cerebellum.</text>
</comment>
<comment type="domain">
    <text evidence="12 17 18">The PDZ domain participates in protein-protein interaction, and is responsible for targeting nNos to synaptic membranes (PubMed:15105416, PubMed:17161399, PubMed:23300088). Mediates interaction with VAC14 (PubMed:17161399).</text>
</comment>
<comment type="PTM">
    <text evidence="14">Ubiquitinated; mediated by STUB1/CHIP in the presence of Hsp70 and Hsp40 (in vitro).</text>
</comment>
<comment type="similarity">
    <text evidence="23">Belongs to the NOS family.</text>
</comment>
<feature type="chain" id="PRO_0000170924" description="Nitric oxide synthase 1">
    <location>
        <begin position="1"/>
        <end position="1429"/>
    </location>
</feature>
<feature type="domain" description="PDZ" evidence="5">
    <location>
        <begin position="17"/>
        <end position="99"/>
    </location>
</feature>
<feature type="domain" description="Flavodoxin-like" evidence="4">
    <location>
        <begin position="755"/>
        <end position="935"/>
    </location>
</feature>
<feature type="domain" description="FAD-binding FR-type" evidence="6">
    <location>
        <begin position="990"/>
        <end position="1237"/>
    </location>
</feature>
<feature type="region of interest" description="Interaction with NOSIP" evidence="15">
    <location>
        <begin position="1"/>
        <end position="200"/>
    </location>
</feature>
<feature type="region of interest" description="Disordered" evidence="7">
    <location>
        <begin position="152"/>
        <end position="174"/>
    </location>
</feature>
<feature type="region of interest" description="Interaction with DYNLL1/PIN" evidence="21">
    <location>
        <begin position="163"/>
        <end position="240"/>
    </location>
</feature>
<feature type="region of interest" description="Disordered" evidence="7">
    <location>
        <begin position="214"/>
        <end position="255"/>
    </location>
</feature>
<feature type="region of interest" description="Disordered" evidence="7">
    <location>
        <begin position="271"/>
        <end position="298"/>
    </location>
</feature>
<feature type="region of interest" description="Calmodulin-binding" evidence="16">
    <location>
        <begin position="725"/>
        <end position="745"/>
    </location>
</feature>
<feature type="compositionally biased region" description="Low complexity" evidence="7">
    <location>
        <begin position="160"/>
        <end position="174"/>
    </location>
</feature>
<feature type="compositionally biased region" description="Basic and acidic residues" evidence="7">
    <location>
        <begin position="226"/>
        <end position="243"/>
    </location>
</feature>
<feature type="compositionally biased region" description="Polar residues" evidence="7">
    <location>
        <begin position="280"/>
        <end position="294"/>
    </location>
</feature>
<feature type="binding site" evidence="1">
    <location>
        <position position="334"/>
    </location>
    <ligand>
        <name>(6R)-L-erythro-5,6,7,8-tetrahydrobiopterin</name>
        <dbReference type="ChEBI" id="CHEBI:59560"/>
    </ligand>
</feature>
<feature type="binding site" description="axial binding residue" evidence="1">
    <location>
        <position position="415"/>
    </location>
    <ligand>
        <name>heme b</name>
        <dbReference type="ChEBI" id="CHEBI:60344"/>
    </ligand>
    <ligandPart>
        <name>Fe</name>
        <dbReference type="ChEBI" id="CHEBI:18248"/>
    </ligandPart>
</feature>
<feature type="binding site" evidence="1">
    <location>
        <position position="478"/>
    </location>
    <ligand>
        <name>L-arginine</name>
        <dbReference type="ChEBI" id="CHEBI:32682"/>
    </ligand>
</feature>
<feature type="binding site" evidence="1">
    <location>
        <position position="587"/>
    </location>
    <ligand>
        <name>L-arginine</name>
        <dbReference type="ChEBI" id="CHEBI:32682"/>
    </ligand>
</feature>
<feature type="binding site" evidence="1">
    <location>
        <position position="588"/>
    </location>
    <ligand>
        <name>L-arginine</name>
        <dbReference type="ChEBI" id="CHEBI:32682"/>
    </ligand>
</feature>
<feature type="binding site" evidence="1">
    <location>
        <position position="592"/>
    </location>
    <ligand>
        <name>L-arginine</name>
        <dbReference type="ChEBI" id="CHEBI:32682"/>
    </ligand>
</feature>
<feature type="binding site" evidence="1">
    <location>
        <position position="677"/>
    </location>
    <ligand>
        <name>(6R)-L-erythro-5,6,7,8-tetrahydrobiopterin</name>
        <dbReference type="ChEBI" id="CHEBI:59560"/>
    </ligand>
</feature>
<feature type="binding site" evidence="1">
    <location>
        <position position="678"/>
    </location>
    <ligand>
        <name>(6R)-L-erythro-5,6,7,8-tetrahydrobiopterin</name>
        <dbReference type="ChEBI" id="CHEBI:59560"/>
    </ligand>
</feature>
<feature type="binding site" evidence="1">
    <location>
        <position position="691"/>
    </location>
    <ligand>
        <name>(6R)-L-erythro-5,6,7,8-tetrahydrobiopterin</name>
        <dbReference type="ChEBI" id="CHEBI:59560"/>
    </ligand>
</feature>
<feature type="binding site" evidence="1">
    <location>
        <position position="706"/>
    </location>
    <ligand>
        <name>heme b</name>
        <dbReference type="ChEBI" id="CHEBI:60344"/>
    </ligand>
</feature>
<feature type="binding site" evidence="13 29">
    <location>
        <position position="761"/>
    </location>
    <ligand>
        <name>FMN</name>
        <dbReference type="ChEBI" id="CHEBI:58210"/>
    </ligand>
</feature>
<feature type="binding site" evidence="13 29">
    <location>
        <position position="762"/>
    </location>
    <ligand>
        <name>FMN</name>
        <dbReference type="ChEBI" id="CHEBI:58210"/>
    </ligand>
</feature>
<feature type="binding site" evidence="13 29">
    <location>
        <position position="763"/>
    </location>
    <ligand>
        <name>FMN</name>
        <dbReference type="ChEBI" id="CHEBI:58210"/>
    </ligand>
</feature>
<feature type="binding site" evidence="13 29">
    <location>
        <position position="765"/>
    </location>
    <ligand>
        <name>FMN</name>
        <dbReference type="ChEBI" id="CHEBI:58210"/>
    </ligand>
</feature>
<feature type="binding site" evidence="13 29">
    <location>
        <position position="766"/>
    </location>
    <ligand>
        <name>FMN</name>
        <dbReference type="ChEBI" id="CHEBI:58210"/>
    </ligand>
</feature>
<feature type="binding site" evidence="13 29">
    <location>
        <position position="807"/>
    </location>
    <ligand>
        <name>FMN</name>
        <dbReference type="ChEBI" id="CHEBI:58210"/>
    </ligand>
</feature>
<feature type="binding site" evidence="13 29">
    <location>
        <position position="808"/>
    </location>
    <ligand>
        <name>FMN</name>
        <dbReference type="ChEBI" id="CHEBI:58210"/>
    </ligand>
</feature>
<feature type="binding site" evidence="13 29">
    <location>
        <position position="812"/>
    </location>
    <ligand>
        <name>FMN</name>
        <dbReference type="ChEBI" id="CHEBI:58210"/>
    </ligand>
</feature>
<feature type="binding site" evidence="13 29">
    <location>
        <position position="886"/>
    </location>
    <ligand>
        <name>FMN</name>
        <dbReference type="ChEBI" id="CHEBI:58210"/>
    </ligand>
</feature>
<feature type="binding site" evidence="13 29">
    <location>
        <position position="891"/>
    </location>
    <ligand>
        <name>FMN</name>
        <dbReference type="ChEBI" id="CHEBI:58210"/>
    </ligand>
</feature>
<feature type="binding site" evidence="13 29">
    <location>
        <position position="893"/>
    </location>
    <ligand>
        <name>FMN</name>
        <dbReference type="ChEBI" id="CHEBI:58210"/>
    </ligand>
</feature>
<feature type="binding site" evidence="13 29">
    <location>
        <position position="919"/>
    </location>
    <ligand>
        <name>FMN</name>
        <dbReference type="ChEBI" id="CHEBI:58210"/>
    </ligand>
</feature>
<feature type="binding site" evidence="13 29">
    <location>
        <position position="923"/>
    </location>
    <ligand>
        <name>FMN</name>
        <dbReference type="ChEBI" id="CHEBI:58210"/>
    </ligand>
</feature>
<feature type="binding site" evidence="10 13 26 29">
    <location>
        <position position="1010"/>
    </location>
    <ligand>
        <name>NADP(+)</name>
        <dbReference type="ChEBI" id="CHEBI:58349"/>
    </ligand>
</feature>
<feature type="binding site" evidence="13 29">
    <location>
        <position position="1032"/>
    </location>
    <ligand>
        <name>FAD</name>
        <dbReference type="ChEBI" id="CHEBI:57692"/>
    </ligand>
</feature>
<feature type="binding site" evidence="10 13 26 29">
    <location>
        <position position="1173"/>
    </location>
    <ligand>
        <name>FAD</name>
        <dbReference type="ChEBI" id="CHEBI:57692"/>
    </ligand>
</feature>
<feature type="binding site" evidence="10 13 26 29">
    <location>
        <position position="1174"/>
    </location>
    <ligand>
        <name>FAD</name>
        <dbReference type="ChEBI" id="CHEBI:57692"/>
    </ligand>
</feature>
<feature type="binding site" evidence="13 29">
    <location>
        <position position="1175"/>
    </location>
    <ligand>
        <name>FAD</name>
        <dbReference type="ChEBI" id="CHEBI:57692"/>
    </ligand>
</feature>
<feature type="binding site" evidence="10 13 26 29">
    <location>
        <position position="1176"/>
    </location>
    <ligand>
        <name>FAD</name>
        <dbReference type="ChEBI" id="CHEBI:57692"/>
    </ligand>
</feature>
<feature type="binding site" evidence="10 13 26 29">
    <location>
        <position position="1191"/>
    </location>
    <ligand>
        <name>FAD</name>
        <dbReference type="ChEBI" id="CHEBI:57692"/>
    </ligand>
</feature>
<feature type="binding site" evidence="10 13 26 29">
    <location>
        <position position="1193"/>
    </location>
    <ligand>
        <name>FAD</name>
        <dbReference type="ChEBI" id="CHEBI:57692"/>
    </ligand>
</feature>
<feature type="binding site" evidence="13 29">
    <location>
        <position position="1196"/>
    </location>
    <ligand>
        <name>NADP(+)</name>
        <dbReference type="ChEBI" id="CHEBI:58349"/>
    </ligand>
</feature>
<feature type="binding site" evidence="13 29">
    <location>
        <position position="1197"/>
    </location>
    <ligand>
        <name>FAD</name>
        <dbReference type="ChEBI" id="CHEBI:57692"/>
    </ligand>
</feature>
<feature type="binding site" evidence="10 13 26 29">
    <location>
        <position position="1210"/>
    </location>
    <ligand>
        <name>FAD</name>
        <dbReference type="ChEBI" id="CHEBI:57692"/>
    </ligand>
</feature>
<feature type="binding site" evidence="10 13 26 29">
    <location>
        <position position="1211"/>
    </location>
    <ligand>
        <name>FAD</name>
        <dbReference type="ChEBI" id="CHEBI:57692"/>
    </ligand>
</feature>
<feature type="binding site" evidence="10 13 26 29">
    <location>
        <position position="1212"/>
    </location>
    <ligand>
        <name>FAD</name>
        <dbReference type="ChEBI" id="CHEBI:57692"/>
    </ligand>
</feature>
<feature type="binding site" evidence="10 13 26 29">
    <location>
        <position position="1251"/>
    </location>
    <ligand>
        <name>NADP(+)</name>
        <dbReference type="ChEBI" id="CHEBI:58349"/>
    </ligand>
</feature>
<feature type="binding site" evidence="13 29">
    <location>
        <position position="1284"/>
    </location>
    <ligand>
        <name>NADP(+)</name>
        <dbReference type="ChEBI" id="CHEBI:58349"/>
    </ligand>
</feature>
<feature type="binding site" evidence="10 13 26 29">
    <location>
        <position position="1313"/>
    </location>
    <ligand>
        <name>NADP(+)</name>
        <dbReference type="ChEBI" id="CHEBI:58349"/>
    </ligand>
</feature>
<feature type="binding site" evidence="10 13 26 29">
    <location>
        <position position="1314"/>
    </location>
    <ligand>
        <name>NADP(+)</name>
        <dbReference type="ChEBI" id="CHEBI:58349"/>
    </ligand>
</feature>
<feature type="binding site" evidence="13 29">
    <location>
        <position position="1320"/>
    </location>
    <ligand>
        <name>NADP(+)</name>
        <dbReference type="ChEBI" id="CHEBI:58349"/>
    </ligand>
</feature>
<feature type="binding site" evidence="10 13 26 29">
    <location>
        <position position="1322"/>
    </location>
    <ligand>
        <name>NADP(+)</name>
        <dbReference type="ChEBI" id="CHEBI:58349"/>
    </ligand>
</feature>
<feature type="binding site" evidence="10 13 26 29">
    <location>
        <position position="1324"/>
    </location>
    <ligand>
        <name>NADP(+)</name>
        <dbReference type="ChEBI" id="CHEBI:58349"/>
    </ligand>
</feature>
<feature type="binding site" evidence="10 26">
    <location>
        <position position="1357"/>
    </location>
    <ligand>
        <name>NADP(+)</name>
        <dbReference type="ChEBI" id="CHEBI:58349"/>
    </ligand>
</feature>
<feature type="binding site" evidence="13 29">
    <location>
        <position position="1398"/>
    </location>
    <ligand>
        <name>NADP(+)</name>
        <dbReference type="ChEBI" id="CHEBI:58349"/>
    </ligand>
</feature>
<feature type="binding site" evidence="13 29">
    <location>
        <position position="1400"/>
    </location>
    <ligand>
        <name>NADP(+)</name>
        <dbReference type="ChEBI" id="CHEBI:58349"/>
    </ligand>
</feature>
<feature type="modified residue" description="Phosphoserine" evidence="2">
    <location>
        <position position="280"/>
    </location>
</feature>
<feature type="modified residue" description="Phosphoserine" evidence="30">
    <location>
        <position position="847"/>
    </location>
</feature>
<feature type="modified residue" description="Phosphoserine" evidence="2">
    <location>
        <position position="857"/>
    </location>
</feature>
<feature type="modified residue" description="Phosphoserine" evidence="30">
    <location>
        <position position="858"/>
    </location>
</feature>
<feature type="splice variant" id="VSP_003580" description="In isoform N-NOS-2." evidence="23">
    <location>
        <begin position="504"/>
        <end position="608"/>
    </location>
</feature>
<feature type="splice variant" id="VSP_003581" description="In isoform PNNOS." evidence="22">
    <original>K</original>
    <variation>KYPEPLRFFPRKGPSLSHVDSEAHSLVAARDSQHR</variation>
    <location>
        <position position="839"/>
    </location>
</feature>
<feature type="mutagenesis site" description="No decrease in nitric-oxide synthase activity." evidence="9">
    <original>Y</original>
    <variation>F</variation>
    <location>
        <position position="588"/>
    </location>
</feature>
<feature type="mutagenesis site" description="50% decrease of nitric-oxide synthase activity." evidence="9">
    <original>Y</original>
    <variation>H</variation>
    <location>
        <position position="588"/>
    </location>
</feature>
<feature type="mutagenesis site" description="30% decrease of nitric-oxide synthase activity." evidence="9">
    <original>Y</original>
    <variation>S</variation>
    <location>
        <position position="588"/>
    </location>
</feature>
<feature type="sequence conflict" description="In Ref. 2; AAC52782 and 3; AA sequence." evidence="23" ref="2 3">
    <original>I</original>
    <variation>V</variation>
    <location>
        <position position="269"/>
    </location>
</feature>
<feature type="sequence conflict" description="In Ref. 2; AAC52782 and 3; AA sequence." evidence="23" ref="2 3">
    <original>P</original>
    <variation>A</variation>
    <location>
        <position position="953"/>
    </location>
</feature>
<feature type="sequence conflict" description="In Ref. 2; AAC52782." evidence="23" ref="2">
    <original>F</original>
    <variation>S</variation>
    <location>
        <position position="1008"/>
    </location>
</feature>
<feature type="sequence conflict" description="In Ref. 2; AAC52782." evidence="23" ref="2">
    <original>A</original>
    <variation>V</variation>
    <location>
        <position position="1311"/>
    </location>
</feature>
<feature type="strand" evidence="41">
    <location>
        <begin position="9"/>
        <end position="12"/>
    </location>
</feature>
<feature type="strand" evidence="35">
    <location>
        <begin position="15"/>
        <end position="21"/>
    </location>
</feature>
<feature type="turn" evidence="35">
    <location>
        <begin position="24"/>
        <end position="26"/>
    </location>
</feature>
<feature type="strand" evidence="35">
    <location>
        <begin position="29"/>
        <end position="34"/>
    </location>
</feature>
<feature type="strand" evidence="35">
    <location>
        <begin position="36"/>
        <end position="39"/>
    </location>
</feature>
<feature type="strand" evidence="35">
    <location>
        <begin position="41"/>
        <end position="46"/>
    </location>
</feature>
<feature type="helix" evidence="35">
    <location>
        <begin position="51"/>
        <end position="55"/>
    </location>
</feature>
<feature type="turn" evidence="31">
    <location>
        <begin position="60"/>
        <end position="62"/>
    </location>
</feature>
<feature type="strand" evidence="35">
    <location>
        <begin position="63"/>
        <end position="67"/>
    </location>
</feature>
<feature type="strand" evidence="31">
    <location>
        <begin position="73"/>
        <end position="75"/>
    </location>
</feature>
<feature type="helix" evidence="35">
    <location>
        <begin position="77"/>
        <end position="86"/>
    </location>
</feature>
<feature type="strand" evidence="35">
    <location>
        <begin position="89"/>
        <end position="98"/>
    </location>
</feature>
<feature type="strand" evidence="35">
    <location>
        <begin position="103"/>
        <end position="111"/>
    </location>
</feature>
<feature type="strand" evidence="36">
    <location>
        <begin position="113"/>
        <end position="115"/>
    </location>
</feature>
<feature type="strand" evidence="35">
    <location>
        <begin position="117"/>
        <end position="124"/>
    </location>
</feature>
<feature type="strand" evidence="32">
    <location>
        <begin position="228"/>
        <end position="236"/>
    </location>
</feature>
<feature type="strand" evidence="42">
    <location>
        <begin position="301"/>
        <end position="305"/>
    </location>
</feature>
<feature type="turn" evidence="42">
    <location>
        <begin position="306"/>
        <end position="308"/>
    </location>
</feature>
<feature type="strand" evidence="42">
    <location>
        <begin position="311"/>
        <end position="314"/>
    </location>
</feature>
<feature type="helix" evidence="42">
    <location>
        <begin position="316"/>
        <end position="319"/>
    </location>
</feature>
<feature type="strand" evidence="39">
    <location>
        <begin position="328"/>
        <end position="331"/>
    </location>
</feature>
<feature type="helix" evidence="43">
    <location>
        <begin position="339"/>
        <end position="341"/>
    </location>
</feature>
<feature type="strand" evidence="38">
    <location>
        <begin position="345"/>
        <end position="347"/>
    </location>
</feature>
<feature type="helix" evidence="42">
    <location>
        <begin position="351"/>
        <end position="368"/>
    </location>
</feature>
<feature type="strand" evidence="34">
    <location>
        <begin position="372"/>
        <end position="374"/>
    </location>
</feature>
<feature type="helix" evidence="42">
    <location>
        <begin position="375"/>
        <end position="391"/>
    </location>
</feature>
<feature type="helix" evidence="42">
    <location>
        <begin position="398"/>
        <end position="410"/>
    </location>
</feature>
<feature type="helix" evidence="42">
    <location>
        <begin position="418"/>
        <end position="420"/>
    </location>
</feature>
<feature type="strand" evidence="42">
    <location>
        <begin position="425"/>
        <end position="428"/>
    </location>
</feature>
<feature type="helix" evidence="42">
    <location>
        <begin position="435"/>
        <end position="450"/>
    </location>
</feature>
<feature type="helix" evidence="42">
    <location>
        <begin position="451"/>
        <end position="453"/>
    </location>
</feature>
<feature type="strand" evidence="42">
    <location>
        <begin position="458"/>
        <end position="461"/>
    </location>
</feature>
<feature type="strand" evidence="42">
    <location>
        <begin position="466"/>
        <end position="470"/>
    </location>
</feature>
<feature type="strand" evidence="42">
    <location>
        <begin position="476"/>
        <end position="480"/>
    </location>
</feature>
<feature type="strand" evidence="42">
    <location>
        <begin position="484"/>
        <end position="486"/>
    </location>
</feature>
<feature type="strand" evidence="42">
    <location>
        <begin position="488"/>
        <end position="494"/>
    </location>
</feature>
<feature type="helix" evidence="42">
    <location>
        <begin position="496"/>
        <end position="498"/>
    </location>
</feature>
<feature type="helix" evidence="42">
    <location>
        <begin position="499"/>
        <end position="506"/>
    </location>
</feature>
<feature type="turn" evidence="42">
    <location>
        <begin position="507"/>
        <end position="509"/>
    </location>
</feature>
<feature type="strand" evidence="44">
    <location>
        <begin position="515"/>
        <end position="517"/>
    </location>
</feature>
<feature type="strand" evidence="42">
    <location>
        <begin position="522"/>
        <end position="525"/>
    </location>
</feature>
<feature type="strand" evidence="40">
    <location>
        <begin position="527"/>
        <end position="529"/>
    </location>
</feature>
<feature type="strand" evidence="42">
    <location>
        <begin position="532"/>
        <end position="534"/>
    </location>
</feature>
<feature type="helix" evidence="42">
    <location>
        <begin position="538"/>
        <end position="540"/>
    </location>
</feature>
<feature type="strand" evidence="42">
    <location>
        <begin position="543"/>
        <end position="545"/>
    </location>
</feature>
<feature type="helix" evidence="42">
    <location>
        <begin position="554"/>
        <end position="557"/>
    </location>
</feature>
<feature type="strand" evidence="42">
    <location>
        <begin position="560"/>
        <end position="563"/>
    </location>
</feature>
<feature type="strand" evidence="42">
    <location>
        <begin position="571"/>
        <end position="574"/>
    </location>
</feature>
<feature type="strand" evidence="42">
    <location>
        <begin position="577"/>
        <end position="580"/>
    </location>
</feature>
<feature type="helix" evidence="42">
    <location>
        <begin position="590"/>
        <end position="594"/>
    </location>
</feature>
<feature type="helix" evidence="42">
    <location>
        <begin position="596"/>
        <end position="599"/>
    </location>
</feature>
<feature type="turn" evidence="42">
    <location>
        <begin position="601"/>
        <end position="604"/>
    </location>
</feature>
<feature type="helix" evidence="42">
    <location>
        <begin position="607"/>
        <end position="614"/>
    </location>
</feature>
<feature type="helix" evidence="42">
    <location>
        <begin position="621"/>
        <end position="623"/>
    </location>
</feature>
<feature type="helix" evidence="42">
    <location>
        <begin position="625"/>
        <end position="643"/>
    </location>
</feature>
<feature type="helix" evidence="42">
    <location>
        <begin position="651"/>
        <end position="668"/>
    </location>
</feature>
<feature type="helix" evidence="42">
    <location>
        <begin position="676"/>
        <end position="679"/>
    </location>
</feature>
<feature type="strand" evidence="42">
    <location>
        <begin position="682"/>
        <end position="684"/>
    </location>
</feature>
<feature type="helix" evidence="42">
    <location>
        <begin position="685"/>
        <end position="687"/>
    </location>
</feature>
<feature type="helix" evidence="42">
    <location>
        <begin position="689"/>
        <end position="692"/>
    </location>
</feature>
<feature type="strand" evidence="40">
    <location>
        <begin position="696"/>
        <end position="698"/>
    </location>
</feature>
<feature type="strand" evidence="42">
    <location>
        <begin position="701"/>
        <end position="705"/>
    </location>
</feature>
<feature type="helix" evidence="42">
    <location>
        <begin position="710"/>
        <end position="713"/>
    </location>
</feature>
<feature type="strand" evidence="37">
    <location>
        <begin position="754"/>
        <end position="760"/>
    </location>
</feature>
<feature type="strand" evidence="37">
    <location>
        <begin position="762"/>
        <end position="764"/>
    </location>
</feature>
<feature type="helix" evidence="37">
    <location>
        <begin position="765"/>
        <end position="777"/>
    </location>
</feature>
<feature type="turn" evidence="37">
    <location>
        <begin position="778"/>
        <end position="780"/>
    </location>
</feature>
<feature type="strand" evidence="37">
    <location>
        <begin position="781"/>
        <end position="787"/>
    </location>
</feature>
<feature type="turn" evidence="37">
    <location>
        <begin position="788"/>
        <end position="790"/>
    </location>
</feature>
<feature type="helix" evidence="37">
    <location>
        <begin position="796"/>
        <end position="798"/>
    </location>
</feature>
<feature type="strand" evidence="37">
    <location>
        <begin position="800"/>
        <end position="806"/>
    </location>
</feature>
<feature type="turn" evidence="37">
    <location>
        <begin position="810"/>
        <end position="812"/>
    </location>
</feature>
<feature type="helix" evidence="37">
    <location>
        <begin position="816"/>
        <end position="818"/>
    </location>
</feature>
<feature type="helix" evidence="37">
    <location>
        <begin position="819"/>
        <end position="828"/>
    </location>
</feature>
<feature type="helix" evidence="37">
    <location>
        <begin position="841"/>
        <end position="844"/>
    </location>
</feature>
<feature type="turn" evidence="37">
    <location>
        <begin position="873"/>
        <end position="876"/>
    </location>
</feature>
<feature type="strand" evidence="37">
    <location>
        <begin position="878"/>
        <end position="885"/>
    </location>
</feature>
<feature type="strand" evidence="37">
    <location>
        <begin position="889"/>
        <end position="891"/>
    </location>
</feature>
<feature type="helix" evidence="37">
    <location>
        <begin position="894"/>
        <end position="905"/>
    </location>
</feature>
<feature type="strand" evidence="37">
    <location>
        <begin position="909"/>
        <end position="912"/>
    </location>
</feature>
<feature type="strand" evidence="37">
    <location>
        <begin position="915"/>
        <end position="918"/>
    </location>
</feature>
<feature type="turn" evidence="37">
    <location>
        <begin position="919"/>
        <end position="922"/>
    </location>
</feature>
<feature type="helix" evidence="37">
    <location>
        <begin position="923"/>
        <end position="942"/>
    </location>
</feature>
<feature type="strand" evidence="37">
    <location>
        <begin position="946"/>
        <end position="948"/>
    </location>
</feature>
<feature type="strand" evidence="37">
    <location>
        <begin position="961"/>
        <end position="963"/>
    </location>
</feature>
<feature type="strand" evidence="33">
    <location>
        <begin position="968"/>
        <end position="973"/>
    </location>
</feature>
<feature type="helix" evidence="33">
    <location>
        <begin position="980"/>
        <end position="988"/>
    </location>
</feature>
<feature type="strand" evidence="33">
    <location>
        <begin position="993"/>
        <end position="1002"/>
    </location>
</feature>
<feature type="strand" evidence="33">
    <location>
        <begin position="1012"/>
        <end position="1018"/>
    </location>
</feature>
<feature type="helix" evidence="33">
    <location>
        <begin position="1023"/>
        <end position="1025"/>
    </location>
</feature>
<feature type="strand" evidence="33">
    <location>
        <begin position="1032"/>
        <end position="1035"/>
    </location>
</feature>
<feature type="helix" evidence="33">
    <location>
        <begin position="1041"/>
        <end position="1048"/>
    </location>
</feature>
<feature type="strand" evidence="33">
    <location>
        <begin position="1051"/>
        <end position="1053"/>
    </location>
</feature>
<feature type="strand" evidence="33">
    <location>
        <begin position="1061"/>
        <end position="1072"/>
    </location>
</feature>
<feature type="strand" evidence="33">
    <location>
        <begin position="1076"/>
        <end position="1081"/>
    </location>
</feature>
<feature type="helix" evidence="33">
    <location>
        <begin position="1090"/>
        <end position="1096"/>
    </location>
</feature>
<feature type="helix" evidence="33">
    <location>
        <begin position="1106"/>
        <end position="1113"/>
    </location>
</feature>
<feature type="helix" evidence="33">
    <location>
        <begin position="1119"/>
        <end position="1128"/>
    </location>
</feature>
<feature type="helix" evidence="33">
    <location>
        <begin position="1133"/>
        <end position="1142"/>
    </location>
</feature>
<feature type="helix" evidence="33">
    <location>
        <begin position="1146"/>
        <end position="1152"/>
    </location>
</feature>
<feature type="helix" evidence="33">
    <location>
        <begin position="1160"/>
        <end position="1166"/>
    </location>
</feature>
<feature type="strand" evidence="33">
    <location>
        <begin position="1173"/>
        <end position="1176"/>
    </location>
</feature>
<feature type="turn" evidence="33">
    <location>
        <begin position="1181"/>
        <end position="1183"/>
    </location>
</feature>
<feature type="strand" evidence="33">
    <location>
        <begin position="1187"/>
        <end position="1193"/>
    </location>
</feature>
<feature type="strand" evidence="33">
    <location>
        <begin position="1196"/>
        <end position="1198"/>
    </location>
</feature>
<feature type="helix" evidence="33">
    <location>
        <begin position="1200"/>
        <end position="1202"/>
    </location>
</feature>
<feature type="strand" evidence="33">
    <location>
        <begin position="1206"/>
        <end position="1208"/>
    </location>
</feature>
<feature type="helix" evidence="33">
    <location>
        <begin position="1210"/>
        <end position="1215"/>
    </location>
</feature>
<feature type="strand" evidence="33">
    <location>
        <begin position="1223"/>
        <end position="1229"/>
    </location>
</feature>
<feature type="helix" evidence="37">
    <location>
        <begin position="1232"/>
        <end position="1234"/>
    </location>
</feature>
<feature type="strand" evidence="33">
    <location>
        <begin position="1244"/>
        <end position="1247"/>
    </location>
</feature>
<feature type="helix" evidence="33">
    <location>
        <begin position="1250"/>
        <end position="1253"/>
    </location>
</feature>
<feature type="helix" evidence="33">
    <location>
        <begin position="1254"/>
        <end position="1270"/>
    </location>
</feature>
<feature type="strand" evidence="33">
    <location>
        <begin position="1277"/>
        <end position="1284"/>
    </location>
</feature>
<feature type="turn" evidence="33">
    <location>
        <begin position="1286"/>
        <end position="1288"/>
    </location>
</feature>
<feature type="helix" evidence="33">
    <location>
        <begin position="1293"/>
        <end position="1301"/>
    </location>
</feature>
<feature type="strand" evidence="33">
    <location>
        <begin position="1304"/>
        <end position="1314"/>
    </location>
</feature>
<feature type="helix" evidence="33">
    <location>
        <begin position="1323"/>
        <end position="1330"/>
    </location>
</feature>
<feature type="helix" evidence="33">
    <location>
        <begin position="1332"/>
        <end position="1340"/>
    </location>
</feature>
<feature type="strand" evidence="33">
    <location>
        <begin position="1345"/>
        <end position="1350"/>
    </location>
</feature>
<feature type="helix" evidence="33">
    <location>
        <begin position="1352"/>
        <end position="1369"/>
    </location>
</feature>
<feature type="helix" evidence="33">
    <location>
        <begin position="1374"/>
        <end position="1386"/>
    </location>
</feature>
<feature type="strand" evidence="33">
    <location>
        <begin position="1390"/>
        <end position="1394"/>
    </location>
</feature>
<feature type="helix" evidence="37">
    <location>
        <begin position="1401"/>
        <end position="1411"/>
    </location>
</feature>
<keyword id="KW-0002">3D-structure</keyword>
<keyword id="KW-0025">Alternative splicing</keyword>
<keyword id="KW-0112">Calmodulin-binding</keyword>
<keyword id="KW-1003">Cell membrane</keyword>
<keyword id="KW-0966">Cell projection</keyword>
<keyword id="KW-0903">Direct protein sequencing</keyword>
<keyword id="KW-0274">FAD</keyword>
<keyword id="KW-0285">Flavoprotein</keyword>
<keyword id="KW-0288">FMN</keyword>
<keyword id="KW-0349">Heme</keyword>
<keyword id="KW-0408">Iron</keyword>
<keyword id="KW-0472">Membrane</keyword>
<keyword id="KW-0479">Metal-binding</keyword>
<keyword id="KW-0521">NADP</keyword>
<keyword id="KW-0560">Oxidoreductase</keyword>
<keyword id="KW-0597">Phosphoprotein</keyword>
<keyword id="KW-1185">Reference proteome</keyword>
<keyword id="KW-0770">Synapse</keyword>
<keyword id="KW-0832">Ubl conjugation</keyword>
<gene>
    <name evidence="25" type="primary">Nos1</name>
    <name type="synonym">Bnos</name>
</gene>